<dbReference type="EMBL" id="AF015308">
    <property type="protein sequence ID" value="AAC52086.1"/>
    <property type="molecule type" value="mRNA"/>
</dbReference>
<dbReference type="EMBL" id="AF068007">
    <property type="protein sequence ID" value="AAC68599.1"/>
    <property type="status" value="ALT_FRAME"/>
    <property type="molecule type" value="mRNA"/>
</dbReference>
<dbReference type="EMBL" id="AY336730">
    <property type="protein sequence ID" value="AAQ84517.1"/>
    <property type="molecule type" value="mRNA"/>
</dbReference>
<dbReference type="EMBL" id="BX538079">
    <property type="protein sequence ID" value="CAD98003.1"/>
    <property type="molecule type" value="mRNA"/>
</dbReference>
<dbReference type="EMBL" id="AC020612">
    <property type="status" value="NOT_ANNOTATED_CDS"/>
    <property type="molecule type" value="Genomic_DNA"/>
</dbReference>
<dbReference type="EMBL" id="CH471111">
    <property type="protein sequence ID" value="EAW58078.1"/>
    <property type="molecule type" value="Genomic_DNA"/>
</dbReference>
<dbReference type="EMBL" id="BC011794">
    <property type="protein sequence ID" value="AAH11794.1"/>
    <property type="molecule type" value="mRNA"/>
</dbReference>
<dbReference type="CCDS" id="CCDS31795.1">
    <molecule id="Q96EZ8-2"/>
</dbReference>
<dbReference type="CCDS" id="CCDS61118.1">
    <molecule id="Q96EZ8-4"/>
</dbReference>
<dbReference type="CCDS" id="CCDS8787.1">
    <molecule id="Q96EZ8-1"/>
</dbReference>
<dbReference type="RefSeq" id="NP_001012300.1">
    <molecule id="Q96EZ8-2"/>
    <property type="nucleotide sequence ID" value="NM_001012300.1"/>
</dbReference>
<dbReference type="RefSeq" id="NP_001265270.1">
    <molecule id="Q96EZ8-4"/>
    <property type="nucleotide sequence ID" value="NM_001278341.2"/>
</dbReference>
<dbReference type="RefSeq" id="NP_006328.2">
    <molecule id="Q96EZ8-1"/>
    <property type="nucleotide sequence ID" value="NM_006337.4"/>
</dbReference>
<dbReference type="RefSeq" id="XP_005268629.1">
    <molecule id="Q96EZ8-1"/>
    <property type="nucleotide sequence ID" value="XM_005268572.3"/>
</dbReference>
<dbReference type="RefSeq" id="XP_011536062.2">
    <molecule id="Q96EZ8-3"/>
    <property type="nucleotide sequence ID" value="XM_011537760.4"/>
</dbReference>
<dbReference type="RefSeq" id="XP_016874178.1">
    <property type="nucleotide sequence ID" value="XM_017018689.1"/>
</dbReference>
<dbReference type="RefSeq" id="XP_016874179.1">
    <molecule id="Q96EZ8-2"/>
    <property type="nucleotide sequence ID" value="XM_017018690.2"/>
</dbReference>
<dbReference type="RefSeq" id="XP_054226748.1">
    <molecule id="Q96EZ8-3"/>
    <property type="nucleotide sequence ID" value="XM_054370773.1"/>
</dbReference>
<dbReference type="RefSeq" id="XP_054226749.1">
    <molecule id="Q96EZ8-2"/>
    <property type="nucleotide sequence ID" value="XM_054370774.1"/>
</dbReference>
<dbReference type="RefSeq" id="XP_054226750.1">
    <molecule id="Q96EZ8-1"/>
    <property type="nucleotide sequence ID" value="XM_054370775.1"/>
</dbReference>
<dbReference type="EMDB" id="EMD-17541"/>
<dbReference type="SMR" id="Q96EZ8"/>
<dbReference type="BioGRID" id="115710">
    <property type="interactions" value="240"/>
</dbReference>
<dbReference type="ComplexPortal" id="CPX-809">
    <property type="entry name" value="NSL histone acetyltransferase complex"/>
</dbReference>
<dbReference type="ComplexPortal" id="CPX-846">
    <property type="entry name" value="INO80 chromatin remodeling complex"/>
</dbReference>
<dbReference type="CORUM" id="Q96EZ8"/>
<dbReference type="FunCoup" id="Q96EZ8">
    <property type="interactions" value="2296"/>
</dbReference>
<dbReference type="IntAct" id="Q96EZ8">
    <property type="interactions" value="186"/>
</dbReference>
<dbReference type="MINT" id="Q96EZ8"/>
<dbReference type="STRING" id="9606.ENSP00000349640"/>
<dbReference type="MoonProt" id="Q96EZ8"/>
<dbReference type="iPTMnet" id="Q96EZ8"/>
<dbReference type="PhosphoSitePlus" id="Q96EZ8"/>
<dbReference type="SwissPalm" id="Q96EZ8"/>
<dbReference type="BioMuta" id="MCRS1"/>
<dbReference type="DMDM" id="24638035"/>
<dbReference type="jPOST" id="Q96EZ8"/>
<dbReference type="MassIVE" id="Q96EZ8"/>
<dbReference type="PaxDb" id="9606-ENSP00000349640"/>
<dbReference type="PeptideAtlas" id="Q96EZ8"/>
<dbReference type="ProteomicsDB" id="69010"/>
<dbReference type="ProteomicsDB" id="76477">
    <molecule id="Q96EZ8-1"/>
</dbReference>
<dbReference type="ProteomicsDB" id="76478">
    <molecule id="Q96EZ8-2"/>
</dbReference>
<dbReference type="ProteomicsDB" id="76479">
    <molecule id="Q96EZ8-3"/>
</dbReference>
<dbReference type="Pumba" id="Q96EZ8"/>
<dbReference type="Antibodypedia" id="25985">
    <property type="antibodies" value="155 antibodies from 24 providers"/>
</dbReference>
<dbReference type="DNASU" id="10445"/>
<dbReference type="Ensembl" id="ENST00000343810.9">
    <molecule id="Q96EZ8-1"/>
    <property type="protein sequence ID" value="ENSP00000345358.4"/>
    <property type="gene ID" value="ENSG00000187778.14"/>
</dbReference>
<dbReference type="Ensembl" id="ENST00000357123.8">
    <molecule id="Q96EZ8-2"/>
    <property type="protein sequence ID" value="ENSP00000349640.4"/>
    <property type="gene ID" value="ENSG00000187778.14"/>
</dbReference>
<dbReference type="Ensembl" id="ENST00000546244.5">
    <molecule id="Q96EZ8-4"/>
    <property type="protein sequence ID" value="ENSP00000444982.1"/>
    <property type="gene ID" value="ENSG00000187778.14"/>
</dbReference>
<dbReference type="Ensembl" id="ENST00000550165.5">
    <molecule id="Q96EZ8-1"/>
    <property type="protein sequence ID" value="ENSP00000448056.1"/>
    <property type="gene ID" value="ENSG00000187778.14"/>
</dbReference>
<dbReference type="GeneID" id="10445"/>
<dbReference type="KEGG" id="hsa:10445"/>
<dbReference type="MANE-Select" id="ENST00000343810.9">
    <property type="protein sequence ID" value="ENSP00000345358.4"/>
    <property type="RefSeq nucleotide sequence ID" value="NM_006337.5"/>
    <property type="RefSeq protein sequence ID" value="NP_006328.2"/>
</dbReference>
<dbReference type="UCSC" id="uc001rui.3">
    <molecule id="Q96EZ8-1"/>
    <property type="organism name" value="human"/>
</dbReference>
<dbReference type="AGR" id="HGNC:6960"/>
<dbReference type="CTD" id="10445"/>
<dbReference type="DisGeNET" id="10445"/>
<dbReference type="GeneCards" id="MCRS1"/>
<dbReference type="HGNC" id="HGNC:6960">
    <property type="gene designation" value="MCRS1"/>
</dbReference>
<dbReference type="HPA" id="ENSG00000187778">
    <property type="expression patterns" value="Low tissue specificity"/>
</dbReference>
<dbReference type="MIM" id="609504">
    <property type="type" value="gene"/>
</dbReference>
<dbReference type="neXtProt" id="NX_Q96EZ8"/>
<dbReference type="OpenTargets" id="ENSG00000187778"/>
<dbReference type="PharmGKB" id="PA30708"/>
<dbReference type="VEuPathDB" id="HostDB:ENSG00000187778"/>
<dbReference type="eggNOG" id="KOG2293">
    <property type="taxonomic scope" value="Eukaryota"/>
</dbReference>
<dbReference type="GeneTree" id="ENSGT00390000005536"/>
<dbReference type="HOGENOM" id="CLU_035858_0_0_1"/>
<dbReference type="InParanoid" id="Q96EZ8"/>
<dbReference type="OMA" id="HNTDGFL"/>
<dbReference type="OrthoDB" id="10262769at2759"/>
<dbReference type="PAN-GO" id="Q96EZ8">
    <property type="GO annotations" value="2 GO annotations based on evolutionary models"/>
</dbReference>
<dbReference type="PhylomeDB" id="Q96EZ8"/>
<dbReference type="TreeFam" id="TF318119"/>
<dbReference type="PathwayCommons" id="Q96EZ8"/>
<dbReference type="Reactome" id="R-HSA-3214847">
    <property type="pathway name" value="HATs acetylate histones"/>
</dbReference>
<dbReference type="Reactome" id="R-HSA-5689603">
    <property type="pathway name" value="UCH proteinases"/>
</dbReference>
<dbReference type="Reactome" id="R-HSA-5696394">
    <property type="pathway name" value="DNA Damage Recognition in GG-NER"/>
</dbReference>
<dbReference type="Reactome" id="R-HSA-9772755">
    <property type="pathway name" value="Formation of WDR5-containing histone-modifying complexes"/>
</dbReference>
<dbReference type="SignaLink" id="Q96EZ8"/>
<dbReference type="SIGNOR" id="Q96EZ8"/>
<dbReference type="BioGRID-ORCS" id="10445">
    <property type="hits" value="494 hits in 1161 CRISPR screens"/>
</dbReference>
<dbReference type="CD-CODE" id="8C2F96ED">
    <property type="entry name" value="Centrosome"/>
</dbReference>
<dbReference type="CD-CODE" id="91857CE7">
    <property type="entry name" value="Nucleolus"/>
</dbReference>
<dbReference type="ChiTaRS" id="MCRS1">
    <property type="organism name" value="human"/>
</dbReference>
<dbReference type="GeneWiki" id="MCRS1"/>
<dbReference type="GenomeRNAi" id="10445"/>
<dbReference type="Pharos" id="Q96EZ8">
    <property type="development level" value="Tbio"/>
</dbReference>
<dbReference type="PRO" id="PR:Q96EZ8"/>
<dbReference type="Proteomes" id="UP000005640">
    <property type="component" value="Chromosome 12"/>
</dbReference>
<dbReference type="RNAct" id="Q96EZ8">
    <property type="molecule type" value="protein"/>
</dbReference>
<dbReference type="Bgee" id="ENSG00000187778">
    <property type="expression patterns" value="Expressed in apex of heart and 198 other cell types or tissues"/>
</dbReference>
<dbReference type="ExpressionAtlas" id="Q96EZ8">
    <property type="expression patterns" value="baseline and differential"/>
</dbReference>
<dbReference type="GO" id="GO:0005737">
    <property type="term" value="C:cytoplasm"/>
    <property type="evidence" value="ECO:0000314"/>
    <property type="project" value="UniProtKB"/>
</dbReference>
<dbReference type="GO" id="GO:0030425">
    <property type="term" value="C:dendrite"/>
    <property type="evidence" value="ECO:0000250"/>
    <property type="project" value="UniProtKB"/>
</dbReference>
<dbReference type="GO" id="GO:0000123">
    <property type="term" value="C:histone acetyltransferase complex"/>
    <property type="evidence" value="ECO:0000314"/>
    <property type="project" value="UniProtKB"/>
</dbReference>
<dbReference type="GO" id="GO:0031011">
    <property type="term" value="C:Ino80 complex"/>
    <property type="evidence" value="ECO:0000314"/>
    <property type="project" value="UniProtKB"/>
</dbReference>
<dbReference type="GO" id="GO:0071339">
    <property type="term" value="C:MLL1 complex"/>
    <property type="evidence" value="ECO:0000314"/>
    <property type="project" value="UniProtKB"/>
</dbReference>
<dbReference type="GO" id="GO:0044545">
    <property type="term" value="C:NSL complex"/>
    <property type="evidence" value="ECO:0000314"/>
    <property type="project" value="ComplexPortal"/>
</dbReference>
<dbReference type="GO" id="GO:0016604">
    <property type="term" value="C:nuclear body"/>
    <property type="evidence" value="ECO:0000314"/>
    <property type="project" value="HPA"/>
</dbReference>
<dbReference type="GO" id="GO:0005730">
    <property type="term" value="C:nucleolus"/>
    <property type="evidence" value="ECO:0000314"/>
    <property type="project" value="UniProtKB"/>
</dbReference>
<dbReference type="GO" id="GO:0005654">
    <property type="term" value="C:nucleoplasm"/>
    <property type="evidence" value="ECO:0000314"/>
    <property type="project" value="HPA"/>
</dbReference>
<dbReference type="GO" id="GO:0005634">
    <property type="term" value="C:nucleus"/>
    <property type="evidence" value="ECO:0000314"/>
    <property type="project" value="UniProtKB"/>
</dbReference>
<dbReference type="GO" id="GO:0043204">
    <property type="term" value="C:perikaryon"/>
    <property type="evidence" value="ECO:0000250"/>
    <property type="project" value="UniProtKB"/>
</dbReference>
<dbReference type="GO" id="GO:0002151">
    <property type="term" value="F:G-quadruplex RNA binding"/>
    <property type="evidence" value="ECO:0000314"/>
    <property type="project" value="UniProtKB"/>
</dbReference>
<dbReference type="GO" id="GO:0034046">
    <property type="term" value="F:poly(G) binding"/>
    <property type="evidence" value="ECO:0000314"/>
    <property type="project" value="UniProtKB"/>
</dbReference>
<dbReference type="GO" id="GO:0008266">
    <property type="term" value="F:poly(U) RNA binding"/>
    <property type="evidence" value="ECO:0000314"/>
    <property type="project" value="UniProtKB"/>
</dbReference>
<dbReference type="GO" id="GO:0010521">
    <property type="term" value="F:telomerase inhibitor activity"/>
    <property type="evidence" value="ECO:0000314"/>
    <property type="project" value="BHF-UCL"/>
</dbReference>
<dbReference type="GO" id="GO:0006338">
    <property type="term" value="P:chromatin remodeling"/>
    <property type="evidence" value="ECO:0000314"/>
    <property type="project" value="ComplexPortal"/>
</dbReference>
<dbReference type="GO" id="GO:0006310">
    <property type="term" value="P:DNA recombination"/>
    <property type="evidence" value="ECO:0007669"/>
    <property type="project" value="UniProtKB-KW"/>
</dbReference>
<dbReference type="GO" id="GO:0006281">
    <property type="term" value="P:DNA repair"/>
    <property type="evidence" value="ECO:0007669"/>
    <property type="project" value="UniProtKB-KW"/>
</dbReference>
<dbReference type="GO" id="GO:1904357">
    <property type="term" value="P:negative regulation of telomere maintenance via telomere lengthening"/>
    <property type="evidence" value="ECO:0000314"/>
    <property type="project" value="BHF-UCL"/>
</dbReference>
<dbReference type="GO" id="GO:0045739">
    <property type="term" value="P:positive regulation of DNA repair"/>
    <property type="evidence" value="ECO:0000266"/>
    <property type="project" value="ComplexPortal"/>
</dbReference>
<dbReference type="GO" id="GO:0045893">
    <property type="term" value="P:positive regulation of DNA-templated transcription"/>
    <property type="evidence" value="ECO:0000315"/>
    <property type="project" value="ComplexPortal"/>
</dbReference>
<dbReference type="GO" id="GO:1904751">
    <property type="term" value="P:positive regulation of protein localization to nucleolus"/>
    <property type="evidence" value="ECO:0000314"/>
    <property type="project" value="UniProtKB"/>
</dbReference>
<dbReference type="GO" id="GO:1904507">
    <property type="term" value="P:positive regulation of telomere maintenance in response to DNA damage"/>
    <property type="evidence" value="ECO:0000266"/>
    <property type="project" value="ComplexPortal"/>
</dbReference>
<dbReference type="GO" id="GO:0045944">
    <property type="term" value="P:positive regulation of transcription by RNA polymerase II"/>
    <property type="evidence" value="ECO:0000318"/>
    <property type="project" value="GO_Central"/>
</dbReference>
<dbReference type="GO" id="GO:0036211">
    <property type="term" value="P:protein modification process"/>
    <property type="evidence" value="ECO:0000304"/>
    <property type="project" value="ProtInc"/>
</dbReference>
<dbReference type="GO" id="GO:0051726">
    <property type="term" value="P:regulation of cell cycle"/>
    <property type="evidence" value="ECO:0000315"/>
    <property type="project" value="ComplexPortal"/>
</dbReference>
<dbReference type="GO" id="GO:0033044">
    <property type="term" value="P:regulation of chromosome organization"/>
    <property type="evidence" value="ECO:0000315"/>
    <property type="project" value="ComplexPortal"/>
</dbReference>
<dbReference type="GO" id="GO:0006282">
    <property type="term" value="P:regulation of DNA repair"/>
    <property type="evidence" value="ECO:0000266"/>
    <property type="project" value="ComplexPortal"/>
</dbReference>
<dbReference type="GO" id="GO:0006275">
    <property type="term" value="P:regulation of DNA replication"/>
    <property type="evidence" value="ECO:0000315"/>
    <property type="project" value="ComplexPortal"/>
</dbReference>
<dbReference type="GO" id="GO:0060382">
    <property type="term" value="P:regulation of DNA strand elongation"/>
    <property type="evidence" value="ECO:0000315"/>
    <property type="project" value="ComplexPortal"/>
</dbReference>
<dbReference type="GO" id="GO:0045995">
    <property type="term" value="P:regulation of embryonic development"/>
    <property type="evidence" value="ECO:0000266"/>
    <property type="project" value="ComplexPortal"/>
</dbReference>
<dbReference type="GO" id="GO:0000723">
    <property type="term" value="P:telomere maintenance"/>
    <property type="evidence" value="ECO:0000266"/>
    <property type="project" value="ComplexPortal"/>
</dbReference>
<dbReference type="CDD" id="cd22687">
    <property type="entry name" value="FHA_MCRS1"/>
    <property type="match status" value="1"/>
</dbReference>
<dbReference type="FunFam" id="2.60.200.20:FF:000007">
    <property type="entry name" value="microspherule protein 1 isoform X1"/>
    <property type="match status" value="1"/>
</dbReference>
<dbReference type="Gene3D" id="2.60.200.20">
    <property type="match status" value="1"/>
</dbReference>
<dbReference type="InterPro" id="IPR000253">
    <property type="entry name" value="FHA_dom"/>
</dbReference>
<dbReference type="InterPro" id="IPR037912">
    <property type="entry name" value="MCRS1"/>
</dbReference>
<dbReference type="InterPro" id="IPR025999">
    <property type="entry name" value="MCRS_N"/>
</dbReference>
<dbReference type="InterPro" id="IPR008984">
    <property type="entry name" value="SMAD_FHA_dom_sf"/>
</dbReference>
<dbReference type="PANTHER" id="PTHR13233">
    <property type="entry name" value="MICROSPHERULE PROTEIN 1"/>
    <property type="match status" value="1"/>
</dbReference>
<dbReference type="PANTHER" id="PTHR13233:SF0">
    <property type="entry name" value="MICROSPHERULE PROTEIN 1"/>
    <property type="match status" value="1"/>
</dbReference>
<dbReference type="Pfam" id="PF00498">
    <property type="entry name" value="FHA"/>
    <property type="match status" value="1"/>
</dbReference>
<dbReference type="Pfam" id="PF13325">
    <property type="entry name" value="MCRS_N"/>
    <property type="match status" value="1"/>
</dbReference>
<dbReference type="SMART" id="SM00240">
    <property type="entry name" value="FHA"/>
    <property type="match status" value="1"/>
</dbReference>
<dbReference type="SUPFAM" id="SSF49879">
    <property type="entry name" value="SMAD/FHA domain"/>
    <property type="match status" value="1"/>
</dbReference>
<dbReference type="PROSITE" id="PS50006">
    <property type="entry name" value="FHA_DOMAIN"/>
    <property type="match status" value="1"/>
</dbReference>
<feature type="chain" id="PRO_0000096305" description="Microspherule protein 1">
    <location>
        <begin position="1"/>
        <end position="462"/>
    </location>
</feature>
<feature type="domain" description="FHA" evidence="3">
    <location>
        <begin position="363"/>
        <end position="419"/>
    </location>
</feature>
<feature type="region of interest" description="Disordered" evidence="4">
    <location>
        <begin position="1"/>
        <end position="130"/>
    </location>
</feature>
<feature type="coiled-coil region" evidence="2">
    <location>
        <begin position="301"/>
        <end position="335"/>
    </location>
</feature>
<feature type="short sequence motif" description="Nuclear localization signal" evidence="2">
    <location>
        <begin position="113"/>
        <end position="123"/>
    </location>
</feature>
<feature type="short sequence motif" description="UBR5-degron" evidence="22">
    <location>
        <begin position="389"/>
        <end position="396"/>
    </location>
</feature>
<feature type="compositionally biased region" description="Basic residues" evidence="4">
    <location>
        <begin position="43"/>
        <end position="55"/>
    </location>
</feature>
<feature type="compositionally biased region" description="Pro residues" evidence="4">
    <location>
        <begin position="103"/>
        <end position="112"/>
    </location>
</feature>
<feature type="modified residue" description="N-acetylmethionine" evidence="34">
    <location>
        <position position="1"/>
    </location>
</feature>
<feature type="modified residue" description="Phosphoserine" evidence="32">
    <location>
        <position position="22"/>
    </location>
</feature>
<feature type="modified residue" description="Phosphoserine" evidence="1">
    <location>
        <position position="102"/>
    </location>
</feature>
<feature type="modified residue" description="Phosphothreonine" evidence="28">
    <location>
        <position position="103"/>
    </location>
</feature>
<feature type="modified residue" description="Phosphoserine" evidence="28 29 31 32 35">
    <location>
        <position position="108"/>
    </location>
</feature>
<feature type="modified residue" description="N6-acetyllysine" evidence="30">
    <location>
        <position position="123"/>
    </location>
</feature>
<feature type="modified residue" description="N6-acetyllysine" evidence="30">
    <location>
        <position position="130"/>
    </location>
</feature>
<feature type="modified residue" description="Phosphoserine" evidence="29 31 32 33 35 36">
    <location>
        <position position="282"/>
    </location>
</feature>
<feature type="splice variant" id="VSP_054571" description="In isoform 4." evidence="27">
    <location>
        <begin position="1"/>
        <end position="191"/>
    </location>
</feature>
<feature type="splice variant" id="VSP_016259" description="In isoform 3." evidence="26">
    <location>
        <begin position="1"/>
        <end position="13"/>
    </location>
</feature>
<feature type="splice variant" id="VSP_016260" description="In isoform 2." evidence="25">
    <original>MDK</original>
    <variation>MTRGTGGTAQRGRSGP</variation>
    <location>
        <begin position="1"/>
        <end position="3"/>
    </location>
</feature>
<feature type="sequence variant" id="VAR_035473" description="In a colorectal cancer sample; somatic mutation; dbSNP:rs780785469." evidence="11">
    <original>V</original>
    <variation>I</variation>
    <location>
        <position position="441"/>
    </location>
</feature>
<feature type="mutagenesis site" description="Reduces phosphorylation by AURKA. Does not rescue the mitotic defect seen in MCRS1-silenced cells. Does not affect localization to the spindle poles." evidence="18">
    <original>SS</original>
    <variation>AA</variation>
    <location>
        <begin position="35"/>
        <end position="36"/>
    </location>
</feature>
<feature type="mutagenesis site" description="Phosphomimetic mutant; shows a more severe mitotic defect than MCRS1-silenced cells. Does not affect localization to the spindle poles." evidence="18">
    <original>SS</original>
    <variation>EE</variation>
    <location>
        <begin position="35"/>
        <end position="36"/>
    </location>
</feature>
<feature type="mutagenesis site" description="Reduces phosphorylation by TTK. Cells show a mitotic defect and remain longer in mitosis." evidence="20">
    <original>SS</original>
    <variation>AA</variation>
    <location>
        <begin position="64"/>
        <end position="65"/>
    </location>
</feature>
<feature type="mutagenesis site" description="Exhibits mitotic defect. Does not rescue the misaligned chromosome phenotype seen in MCRS1-silenced cells. Does not affect localization to the nucleus and nucleolus during interphase or to the spindle poles during mitosis." evidence="20">
    <original>S</original>
    <variation>A</variation>
    <location>
        <position position="65"/>
    </location>
</feature>
<feature type="mutagenesis site" description="Exhibits normal mitotic timing. Rescues the misaligned chromosome phenotype seen in MCRS1-silenced cells." evidence="20">
    <original>S</original>
    <variation>D</variation>
    <location>
        <position position="65"/>
    </location>
</feature>
<feature type="sequence conflict" description="In Ref. 1; AAC52086." evidence="27" ref="1">
    <original>A</original>
    <variation>G</variation>
    <location>
        <position position="245"/>
    </location>
</feature>
<accession>Q96EZ8</accession>
<accession>O14742</accession>
<accession>O75497</accession>
<accession>Q6VN53</accession>
<accession>Q7Z372</accession>
<protein>
    <recommendedName>
        <fullName>Microspherule protein 1</fullName>
    </recommendedName>
    <alternativeName>
        <fullName>58 kDa microspherule protein</fullName>
    </alternativeName>
    <alternativeName>
        <fullName>Cell cycle-regulated factor p78</fullName>
    </alternativeName>
    <alternativeName>
        <fullName>INO80 complex subunit J</fullName>
    </alternativeName>
    <alternativeName>
        <fullName>MCRS2</fullName>
    </alternativeName>
</protein>
<sequence length="462" mass="51803">MDKDSQGLLDSSLMASGTASRSEDEESLAGQKRASSQALGTIPKRRSSSRFIKRKKFDDELVESSLAKSSTRAKGASGVEPGRCSGSEPSSSEKKKVSKAPSTPVPPSPAPAPGLTKRVKKSKQPLQVTKDLGRWKPADDLLLINAVLQTNDLTSVHLGVKFSCRFTLREVQERWYALLYDPVISKLACQAMRQLHPEAIAAIQSKALFSKAEEQLLSKVGSTSQPTLETFQDLLHRHPDAFYLARTAKALQAHWQLMKQYYLLEDQTVQPLPKGDQVLNFSDAEDLIDDSKLKDMRDEVLEHELMVADRRQKREIRQLEQELHKWQVLVDSITGMSSPDFDNQTLAVLRGRMVRYLMRSREITLGRATKDNQIDVDLSLEGPAWKISRKQGVIKLKNNGDFFIANEGRRPIYIDGRPVLCGSKWRLSNNSVVEIASLRFVFLINQDLIALIRAEAAKITPQ</sequence>
<evidence type="ECO:0000250" key="1">
    <source>
        <dbReference type="UniProtKB" id="Q99L90"/>
    </source>
</evidence>
<evidence type="ECO:0000255" key="2"/>
<evidence type="ECO:0000255" key="3">
    <source>
        <dbReference type="PROSITE-ProRule" id="PRU00086"/>
    </source>
</evidence>
<evidence type="ECO:0000256" key="4">
    <source>
        <dbReference type="SAM" id="MobiDB-lite"/>
    </source>
</evidence>
<evidence type="ECO:0000269" key="5">
    <source>
    </source>
</evidence>
<evidence type="ECO:0000269" key="6">
    <source>
    </source>
</evidence>
<evidence type="ECO:0000269" key="7">
    <source>
    </source>
</evidence>
<evidence type="ECO:0000269" key="8">
    <source>
    </source>
</evidence>
<evidence type="ECO:0000269" key="9">
    <source>
    </source>
</evidence>
<evidence type="ECO:0000269" key="10">
    <source>
    </source>
</evidence>
<evidence type="ECO:0000269" key="11">
    <source>
    </source>
</evidence>
<evidence type="ECO:0000269" key="12">
    <source>
    </source>
</evidence>
<evidence type="ECO:0000269" key="13">
    <source>
    </source>
</evidence>
<evidence type="ECO:0000269" key="14">
    <source>
    </source>
</evidence>
<evidence type="ECO:0000269" key="15">
    <source>
    </source>
</evidence>
<evidence type="ECO:0000269" key="16">
    <source>
    </source>
</evidence>
<evidence type="ECO:0000269" key="17">
    <source>
    </source>
</evidence>
<evidence type="ECO:0000269" key="18">
    <source>
    </source>
</evidence>
<evidence type="ECO:0000269" key="19">
    <source>
    </source>
</evidence>
<evidence type="ECO:0000269" key="20">
    <source>
    </source>
</evidence>
<evidence type="ECO:0000269" key="21">
    <source>
    </source>
</evidence>
<evidence type="ECO:0000269" key="22">
    <source>
    </source>
</evidence>
<evidence type="ECO:0000269" key="23">
    <source>
    </source>
</evidence>
<evidence type="ECO:0000269" key="24">
    <source>
    </source>
</evidence>
<evidence type="ECO:0000303" key="25">
    <source>
    </source>
</evidence>
<evidence type="ECO:0000303" key="26">
    <source>
    </source>
</evidence>
<evidence type="ECO:0000305" key="27"/>
<evidence type="ECO:0007744" key="28">
    <source>
    </source>
</evidence>
<evidence type="ECO:0007744" key="29">
    <source>
    </source>
</evidence>
<evidence type="ECO:0007744" key="30">
    <source>
    </source>
</evidence>
<evidence type="ECO:0007744" key="31">
    <source>
    </source>
</evidence>
<evidence type="ECO:0007744" key="32">
    <source>
    </source>
</evidence>
<evidence type="ECO:0007744" key="33">
    <source>
    </source>
</evidence>
<evidence type="ECO:0007744" key="34">
    <source>
    </source>
</evidence>
<evidence type="ECO:0007744" key="35">
    <source>
    </source>
</evidence>
<evidence type="ECO:0007744" key="36">
    <source>
    </source>
</evidence>
<comment type="function">
    <text evidence="1 5 6 9 10 14 16 17 18 19 20 21">Modulates the transcription repressor activity of DAXX by recruiting it to the nucleolus (PubMed:11948183). As part of the NSL complex, may be involved in acetylation of nucleosomal histone H4 on several lysine residues (PubMed:20018852). Putative regulatory component of the chromatin remodeling INO80 complex which is involved in transcriptional regulation, DNA replication and probably DNA repair. May also be an inhibitor of TERT telomerase activity (PubMed:15044100). Binds to G-quadruplex structures in mRNA (PubMed:16571602). Binds to RNA homomer poly(G) and poly(U) (PubMed:16571602). Maintains RHEB at the lysosome in its active GTP-bound form and prevents its interaction with the mTORC1 complex inhibitor TSC2, ensuring activation of the mTORC1 complex by RHEB (PubMed:25816988). Stabilizes the minus ends of kinetochore fibers by protecting them from depolymerization, ensuring functional spindle assembly during mitosis (PubMed:22081094, PubMed:27192185). Following phosphorylation by TTK/MPS1, enhances recruitment of KIF2A to the minus ends of mitotic spindle microtubules which promotes chromosome alignment (PubMed:30785839). Regulates the morphology of microtubule minus ends in mitotic spindle by maintaining them in a closed conformation characterized by the presence of an electron-dense cap (PubMed:36350698). Regulates G2/M transition and spindle assembly during oocyte meiosis (By similarity). Mediates histone modifications and transcriptional regulation in germinal vesicle oocytes which are required for meiotic progression (By similarity). Also regulates microtubule nucleation and spindle assembly by activating aurora kinases during oocyte meiosis (By similarity). Contributes to the establishment of centriolar satellites and also plays a role in primary cilium formation by recruiting TTBK2 to the mother centriole which is necessary for removal of the CP110 cap from the mother centriole, an early step in ciliogenesis (PubMed:27263857). Required for epiblast development during early embryogenesis (By similarity). Essential for cell viability (PubMed:16547491).</text>
</comment>
<comment type="subunit">
    <text evidence="5 6 7 8 9 10 12 13 14 15 17 19 20 23">Component of the chromatin remodeling INO80 complex; specifically part of a complex module associated with the N-terminus of INO80 (PubMed:16230350, PubMed:18922472, PubMed:21303910). Component of some MLL1/MLL complex, at least composed of the core components KMT2A/MLL1, ASH2L, HCFC1, WDR5 and RBBP5, as well as the facultative components BACC1, CHD8, E2F6, HSP70, INO80C, KANSL1, LAS1L, MAX, MCRS1, MGA, KAT8/MOF, PELP1, PHF20, PRP31, RING2, RUVB1/TIP49A, RUVB2/TIP49B, SENP3, TAF1, TAF4, TAF6, TAF7, TAF9 and TEX10 (PubMed:15960975). Component of the NSL complex at least composed of MOF/KAT8, KANSL1, KANSL2, KANSL3, MCRS1, PHF20, OGT1/OGT, WDR5 and HCFC1 (PubMed:20018852). Interacts with NOP2 (PubMed:9654073). Interacts with PINX1 (PubMed:15044100). Interacts with TERT (PubMed:15044100). Interacts with CCDC85B (PubMed:17014843). Interacts with DAXX (PubMed:11948183). Interacts (via N-terminus) with FMR1 (via phosphorylated form) (PubMed:16571602). Interacts with FXR1 and FXR2 (PubMed:16571602). Interacts (via C-terminus) with NDE1 (via C-terminus); phosphorylation of NDE1 inhibits the interaction (PubMed:16547491). Interacts (via C-terminus) with ZNF375 (PubMed:16547491). Interacts (via C-terminus) with active GTP-bound RHEB (via N-terminus) under conditions of high amino acid concentration; the interaction promotes mTORC1 complex activation by RHEB (PubMed:25816988). Interacts (via N-terminus) with the mTORC1 complex; the interaction ensures mTORC1 activation by RHEB (PubMed:25816988). Interacts with DYNC1I1; the interaction is required for the proper distribution of centriolar satellites (PubMed:27263857). Interacts with TTBK2; the interaction is required for recruitment of TTBK2 to the mother centriole (PubMed:27263857). Interacts with KIF2A; the interaction occurs during mitosis and facilitates chromosome alignment (PubMed:30785839).</text>
</comment>
<comment type="subunit">
    <text evidence="24">(Microbial infection) Interacts with Herpes simplex virus ICP22.</text>
</comment>
<comment type="interaction">
    <interactant intactId="EBI-348259">
        <id>Q96EZ8</id>
    </interactant>
    <interactant intactId="EBI-747899">
        <id>Q8N302</id>
        <label>AGGF1</label>
    </interactant>
    <organismsDiffer>false</organismsDiffer>
    <experiments>3</experiments>
</comment>
<comment type="interaction">
    <interactant intactId="EBI-348259">
        <id>Q96EZ8</id>
    </interactant>
    <interactant intactId="EBI-742108">
        <id>Q96B23</id>
        <label>ARK2N</label>
    </interactant>
    <organismsDiffer>false</organismsDiffer>
    <experiments>5</experiments>
</comment>
<comment type="interaction">
    <interactant intactId="EBI-348259">
        <id>Q96EZ8</id>
    </interactant>
    <interactant intactId="EBI-4400025">
        <id>Q9Y2T1</id>
        <label>AXIN2</label>
    </interactant>
    <organismsDiffer>false</organismsDiffer>
    <experiments>3</experiments>
</comment>
<comment type="interaction">
    <interactant intactId="EBI-348259">
        <id>Q96EZ8</id>
    </interactant>
    <interactant intactId="EBI-1642333">
        <id>Q9BYV9</id>
        <label>BACH2</label>
    </interactant>
    <organismsDiffer>false</organismsDiffer>
    <experiments>3</experiments>
</comment>
<comment type="interaction">
    <interactant intactId="EBI-348259">
        <id>Q96EZ8</id>
    </interactant>
    <interactant intactId="EBI-1211496">
        <id>Q5T5X7</id>
        <label>BEND3</label>
    </interactant>
    <organismsDiffer>false</organismsDiffer>
    <experiments>3</experiments>
</comment>
<comment type="interaction">
    <interactant intactId="EBI-348259">
        <id>Q96EZ8</id>
    </interactant>
    <interactant intactId="EBI-17508719">
        <id>Q7RTU4</id>
        <label>BHLHA9</label>
    </interactant>
    <organismsDiffer>false</organismsDiffer>
    <experiments>3</experiments>
</comment>
<comment type="interaction">
    <interactant intactId="EBI-348259">
        <id>Q96EZ8</id>
    </interactant>
    <interactant intactId="EBI-711810">
        <id>O14503</id>
        <label>BHLHE40</label>
    </interactant>
    <organismsDiffer>false</organismsDiffer>
    <experiments>3</experiments>
</comment>
<comment type="interaction">
    <interactant intactId="EBI-348259">
        <id>Q96EZ8</id>
    </interactant>
    <interactant intactId="EBI-10304361">
        <id>Q9H0E9-2</id>
        <label>BRD8</label>
    </interactant>
    <organismsDiffer>false</organismsDiffer>
    <experiments>3</experiments>
</comment>
<comment type="interaction">
    <interactant intactId="EBI-348259">
        <id>Q96EZ8</id>
    </interactant>
    <interactant intactId="EBI-714781">
        <id>Q9HCU9</id>
        <label>BRMS1</label>
    </interactant>
    <organismsDiffer>false</organismsDiffer>
    <experiments>3</experiments>
</comment>
<comment type="interaction">
    <interactant intactId="EBI-348259">
        <id>Q96EZ8</id>
    </interactant>
    <interactant intactId="EBI-5666615">
        <id>Q5PSV4</id>
        <label>BRMS1L</label>
    </interactant>
    <organismsDiffer>false</organismsDiffer>
    <experiments>5</experiments>
</comment>
<comment type="interaction">
    <interactant intactId="EBI-348259">
        <id>Q96EZ8</id>
    </interactant>
    <interactant intactId="EBI-739879">
        <id>Q53TS8</id>
        <label>C2CD6</label>
    </interactant>
    <organismsDiffer>false</organismsDiffer>
    <experiments>3</experiments>
</comment>
<comment type="interaction">
    <interactant intactId="EBI-348259">
        <id>Q96EZ8</id>
    </interactant>
    <interactant intactId="EBI-11530605">
        <id>Q9H257-2</id>
        <label>CARD9</label>
    </interactant>
    <organismsDiffer>false</organismsDiffer>
    <experiments>3</experiments>
</comment>
<comment type="interaction">
    <interactant intactId="EBI-348259">
        <id>Q96EZ8</id>
    </interactant>
    <interactant intactId="EBI-742141">
        <id>O95810</id>
        <label>CAVIN2</label>
    </interactant>
    <organismsDiffer>false</organismsDiffer>
    <experiments>3</experiments>
</comment>
<comment type="interaction">
    <interactant intactId="EBI-348259">
        <id>Q96EZ8</id>
    </interactant>
    <interactant intactId="EBI-11524851">
        <id>Q8NA61-2</id>
        <label>CBY2</label>
    </interactant>
    <organismsDiffer>false</organismsDiffer>
    <experiments>3</experiments>
</comment>
<comment type="interaction">
    <interactant intactId="EBI-348259">
        <id>Q96EZ8</id>
    </interactant>
    <interactant intactId="EBI-10961312">
        <id>Q8IYE1</id>
        <label>CCDC13</label>
    </interactant>
    <organismsDiffer>false</organismsDiffer>
    <experiments>6</experiments>
</comment>
<comment type="interaction">
    <interactant intactId="EBI-348259">
        <id>Q96EZ8</id>
    </interactant>
    <interactant intactId="EBI-10175300">
        <id>Q8TD31-3</id>
        <label>CCHCR1</label>
    </interactant>
    <organismsDiffer>false</organismsDiffer>
    <experiments>3</experiments>
</comment>
<comment type="interaction">
    <interactant intactId="EBI-348259">
        <id>Q96EZ8</id>
    </interactant>
    <interactant intactId="EBI-741406">
        <id>P51946</id>
        <label>CCNH</label>
    </interactant>
    <organismsDiffer>false</organismsDiffer>
    <experiments>3</experiments>
</comment>
<comment type="interaction">
    <interactant intactId="EBI-348259">
        <id>Q96EZ8</id>
    </interactant>
    <interactant intactId="EBI-5278764">
        <id>Q96GN5</id>
        <label>CDCA7L</label>
    </interactant>
    <organismsDiffer>false</organismsDiffer>
    <experiments>6</experiments>
</comment>
<comment type="interaction">
    <interactant intactId="EBI-348259">
        <id>Q96EZ8</id>
    </interactant>
    <interactant intactId="EBI-744115">
        <id>Q9C0F1</id>
        <label>CEP44</label>
    </interactant>
    <organismsDiffer>false</organismsDiffer>
    <experiments>6</experiments>
</comment>
<comment type="interaction">
    <interactant intactId="EBI-348259">
        <id>Q96EZ8</id>
    </interactant>
    <interactant intactId="EBI-739624">
        <id>Q8NHQ1</id>
        <label>CEP70</label>
    </interactant>
    <organismsDiffer>false</organismsDiffer>
    <experiments>3</experiments>
</comment>
<comment type="interaction">
    <interactant intactId="EBI-348259">
        <id>Q96EZ8</id>
    </interactant>
    <interactant intactId="EBI-947360">
        <id>Q8N137</id>
        <label>CNTROB</label>
    </interactant>
    <organismsDiffer>false</organismsDiffer>
    <experiments>3</experiments>
</comment>
<comment type="interaction">
    <interactant intactId="EBI-348259">
        <id>Q96EZ8</id>
    </interactant>
    <interactant intactId="EBI-945751">
        <id>P38432</id>
        <label>COIL</label>
    </interactant>
    <organismsDiffer>false</organismsDiffer>
    <experiments>3</experiments>
</comment>
<comment type="interaction">
    <interactant intactId="EBI-348259">
        <id>Q96EZ8</id>
    </interactant>
    <interactant intactId="EBI-852194">
        <id>Q68CJ9</id>
        <label>CREB3L3</label>
    </interactant>
    <organismsDiffer>false</organismsDiffer>
    <experiments>3</experiments>
</comment>
<comment type="interaction">
    <interactant intactId="EBI-348259">
        <id>Q96EZ8</id>
    </interactant>
    <interactant intactId="EBI-4311573">
        <id>Q96S65</id>
        <label>CSRNP1</label>
    </interactant>
    <organismsDiffer>false</organismsDiffer>
    <experiments>4</experiments>
</comment>
<comment type="interaction">
    <interactant intactId="EBI-348259">
        <id>Q96EZ8</id>
    </interactant>
    <interactant intactId="EBI-3867333">
        <id>A8MQ03</id>
        <label>CYSRT1</label>
    </interactant>
    <organismsDiffer>false</organismsDiffer>
    <experiments>3</experiments>
</comment>
<comment type="interaction">
    <interactant intactId="EBI-348259">
        <id>Q96EZ8</id>
    </interactant>
    <interactant intactId="EBI-997814">
        <id>O60759</id>
        <label>CYTIP</label>
    </interactant>
    <organismsDiffer>false</organismsDiffer>
    <experiments>3</experiments>
</comment>
<comment type="interaction">
    <interactant intactId="EBI-348259">
        <id>Q96EZ8</id>
    </interactant>
    <interactant intactId="EBI-77321">
        <id>Q9UER7</id>
        <label>DAXX</label>
    </interactant>
    <organismsDiffer>false</organismsDiffer>
    <experiments>11</experiments>
</comment>
<comment type="interaction">
    <interactant intactId="EBI-348259">
        <id>Q96EZ8</id>
    </interactant>
    <interactant intactId="EBI-712941">
        <id>Q14919</id>
        <label>DRAP1</label>
    </interactant>
    <organismsDiffer>false</organismsDiffer>
    <experiments>3</experiments>
</comment>
<comment type="interaction">
    <interactant intactId="EBI-348259">
        <id>Q96EZ8</id>
    </interactant>
    <interactant intactId="EBI-8465203">
        <id>P50548</id>
        <label>ERF</label>
    </interactant>
    <organismsDiffer>false</organismsDiffer>
    <experiments>3</experiments>
</comment>
<comment type="interaction">
    <interactant intactId="EBI-348259">
        <id>Q96EZ8</id>
    </interactant>
    <interactant intactId="EBI-852291">
        <id>O60447</id>
        <label>EVI5</label>
    </interactant>
    <organismsDiffer>false</organismsDiffer>
    <experiments>3</experiments>
</comment>
<comment type="interaction">
    <interactant intactId="EBI-348259">
        <id>Q96EZ8</id>
    </interactant>
    <interactant intactId="EBI-8468186">
        <id>Q8IZU1</id>
        <label>FAM9A</label>
    </interactant>
    <organismsDiffer>false</organismsDiffer>
    <experiments>3</experiments>
</comment>
<comment type="interaction">
    <interactant intactId="EBI-348259">
        <id>Q96EZ8</id>
    </interactant>
    <interactant intactId="EBI-348399">
        <id>P22607</id>
        <label>FGFR3</label>
    </interactant>
    <organismsDiffer>false</organismsDiffer>
    <experiments>3</experiments>
</comment>
<comment type="interaction">
    <interactant intactId="EBI-348259">
        <id>Q96EZ8</id>
    </interactant>
    <interactant intactId="EBI-12903902">
        <id>Q8TC99</id>
        <label>FNDC8</label>
    </interactant>
    <organismsDiffer>false</organismsDiffer>
    <experiments>3</experiments>
</comment>
<comment type="interaction">
    <interactant intactId="EBI-348259">
        <id>Q96EZ8</id>
    </interactant>
    <interactant intactId="EBI-5661036">
        <id>A1L4K1</id>
        <label>FSD2</label>
    </interactant>
    <organismsDiffer>false</organismsDiffer>
    <experiments>3</experiments>
</comment>
<comment type="interaction">
    <interactant intactId="EBI-348259">
        <id>Q96EZ8</id>
    </interactant>
    <interactant intactId="EBI-11022345">
        <id>P51114-2</id>
        <label>FXR1</label>
    </interactant>
    <organismsDiffer>false</organismsDiffer>
    <experiments>3</experiments>
</comment>
<comment type="interaction">
    <interactant intactId="EBI-348259">
        <id>Q96EZ8</id>
    </interactant>
    <interactant intactId="EBI-740459">
        <id>P51116</id>
        <label>FXR2</label>
    </interactant>
    <organismsDiffer>false</organismsDiffer>
    <experiments>4</experiments>
</comment>
<comment type="interaction">
    <interactant intactId="EBI-348259">
        <id>Q96EZ8</id>
    </interactant>
    <interactant intactId="EBI-11745923">
        <id>O60861-1</id>
        <label>GAS7</label>
    </interactant>
    <organismsDiffer>false</organismsDiffer>
    <experiments>3</experiments>
</comment>
<comment type="interaction">
    <interactant intactId="EBI-348259">
        <id>Q96EZ8</id>
    </interactant>
    <interactant intactId="EBI-746252">
        <id>Q96CN9</id>
        <label>GCC1</label>
    </interactant>
    <organismsDiffer>false</organismsDiffer>
    <experiments>3</experiments>
</comment>
<comment type="interaction">
    <interactant intactId="EBI-348259">
        <id>Q96EZ8</id>
    </interactant>
    <interactant intactId="EBI-744104">
        <id>P55040</id>
        <label>GEM</label>
    </interactant>
    <organismsDiffer>false</organismsDiffer>
    <experiments>3</experiments>
</comment>
<comment type="interaction">
    <interactant intactId="EBI-348259">
        <id>Q96EZ8</id>
    </interactant>
    <interactant intactId="EBI-744302">
        <id>P14136</id>
        <label>GFAP</label>
    </interactant>
    <organismsDiffer>false</organismsDiffer>
    <experiments>3</experiments>
</comment>
<comment type="interaction">
    <interactant intactId="EBI-348259">
        <id>Q96EZ8</id>
    </interactant>
    <interactant intactId="EBI-947774">
        <id>O75420</id>
        <label>GIGYF1</label>
    </interactant>
    <organismsDiffer>false</organismsDiffer>
    <experiments>3</experiments>
</comment>
<comment type="interaction">
    <interactant intactId="EBI-348259">
        <id>Q96EZ8</id>
    </interactant>
    <interactant intactId="EBI-618309">
        <id>Q08379</id>
        <label>GOLGA2</label>
    </interactant>
    <organismsDiffer>false</organismsDiffer>
    <experiments>3</experiments>
</comment>
<comment type="interaction">
    <interactant intactId="EBI-348259">
        <id>Q96EZ8</id>
    </interactant>
    <interactant intactId="EBI-2349758">
        <id>Q86WP2</id>
        <label>GPBP1</label>
    </interactant>
    <organismsDiffer>false</organismsDiffer>
    <experiments>5</experiments>
</comment>
<comment type="interaction">
    <interactant intactId="EBI-348259">
        <id>Q96EZ8</id>
    </interactant>
    <interactant intactId="EBI-351506">
        <id>P06396</id>
        <label>GSN</label>
    </interactant>
    <organismsDiffer>false</organismsDiffer>
    <experiments>3</experiments>
</comment>
<comment type="interaction">
    <interactant intactId="EBI-348259">
        <id>Q96EZ8</id>
    </interactant>
    <interactant intactId="EBI-2549423">
        <id>Q6NT76</id>
        <label>HMBOX1</label>
    </interactant>
    <organismsDiffer>false</organismsDiffer>
    <experiments>8</experiments>
</comment>
<comment type="interaction">
    <interactant intactId="EBI-348259">
        <id>Q96EZ8</id>
    </interactant>
    <interactant intactId="EBI-10961706">
        <id>Q96ED9-2</id>
        <label>HOOK2</label>
    </interactant>
    <organismsDiffer>false</organismsDiffer>
    <experiments>3</experiments>
</comment>
<comment type="interaction">
    <interactant intactId="EBI-348259">
        <id>Q96EZ8</id>
    </interactant>
    <interactant intactId="EBI-350145">
        <id>P01112</id>
        <label>HRAS</label>
    </interactant>
    <organismsDiffer>false</organismsDiffer>
    <experiments>3</experiments>
</comment>
<comment type="interaction">
    <interactant intactId="EBI-348259">
        <id>Q96EZ8</id>
    </interactant>
    <interactant intactId="EBI-466029">
        <id>P42858</id>
        <label>HTT</label>
    </interactant>
    <organismsDiffer>false</organismsDiffer>
    <experiments>3</experiments>
</comment>
<comment type="interaction">
    <interactant intactId="EBI-348259">
        <id>Q96EZ8</id>
    </interactant>
    <interactant intactId="EBI-745305">
        <id>Q13422</id>
        <label>IKZF1</label>
    </interactant>
    <organismsDiffer>false</organismsDiffer>
    <experiments>4</experiments>
</comment>
<comment type="interaction">
    <interactant intactId="EBI-348259">
        <id>Q96EZ8</id>
    </interactant>
    <interactant intactId="EBI-11522367">
        <id>Q13422-7</id>
        <label>IKZF1</label>
    </interactant>
    <organismsDiffer>false</organismsDiffer>
    <experiments>3</experiments>
</comment>
<comment type="interaction">
    <interactant intactId="EBI-348259">
        <id>Q96EZ8</id>
    </interactant>
    <interactant intactId="EBI-747204">
        <id>Q9UKT9</id>
        <label>IKZF3</label>
    </interactant>
    <organismsDiffer>false</organismsDiffer>
    <experiments>3</experiments>
</comment>
<comment type="interaction">
    <interactant intactId="EBI-348259">
        <id>Q96EZ8</id>
    </interactant>
    <interactant intactId="EBI-1640423">
        <id>Q9H2S9</id>
        <label>IKZF4</label>
    </interactant>
    <organismsDiffer>false</organismsDiffer>
    <experiments>3</experiments>
</comment>
<comment type="interaction">
    <interactant intactId="EBI-348259">
        <id>Q96EZ8</id>
    </interactant>
    <interactant intactId="EBI-769401">
        <id>Q8NBZ0</id>
        <label>INO80E</label>
    </interactant>
    <organismsDiffer>false</organismsDiffer>
    <experiments>11</experiments>
</comment>
<comment type="interaction">
    <interactant intactId="EBI-348259">
        <id>Q96EZ8</id>
    </interactant>
    <interactant intactId="EBI-4311436">
        <id>Q2T9L4</id>
        <label>INSYN1</label>
    </interactant>
    <organismsDiffer>false</organismsDiffer>
    <experiments>4</experiments>
</comment>
<comment type="interaction">
    <interactant intactId="EBI-348259">
        <id>Q96EZ8</id>
    </interactant>
    <interactant intactId="EBI-2680803">
        <id>Q96N16</id>
        <label>JAKMIP1</label>
    </interactant>
    <organismsDiffer>false</organismsDiffer>
    <experiments>3</experiments>
</comment>
<comment type="interaction">
    <interactant intactId="EBI-348259">
        <id>Q96EZ8</id>
    </interactant>
    <interactant intactId="EBI-2556193">
        <id>Q63ZY3</id>
        <label>KANK2</label>
    </interactant>
    <organismsDiffer>false</organismsDiffer>
    <experiments>3</experiments>
</comment>
<comment type="interaction">
    <interactant intactId="EBI-348259">
        <id>Q96EZ8</id>
    </interactant>
    <interactant intactId="EBI-473199">
        <id>O95251</id>
        <label>KAT7</label>
    </interactant>
    <organismsDiffer>false</organismsDiffer>
    <experiments>3</experiments>
</comment>
<comment type="interaction">
    <interactant intactId="EBI-348259">
        <id>Q96EZ8</id>
    </interactant>
    <interactant intactId="EBI-10181113">
        <id>Q8N8K9</id>
        <label>KIAA1958</label>
    </interactant>
    <organismsDiffer>false</organismsDiffer>
    <experiments>3</experiments>
</comment>
<comment type="interaction">
    <interactant intactId="EBI-348259">
        <id>Q96EZ8</id>
    </interactant>
    <interactant intactId="EBI-1058674">
        <id>Q92764</id>
        <label>KRT35</label>
    </interactant>
    <organismsDiffer>false</organismsDiffer>
    <experiments>3</experiments>
</comment>
<comment type="interaction">
    <interactant intactId="EBI-348259">
        <id>Q96EZ8</id>
    </interactant>
    <interactant intactId="EBI-10172290">
        <id>P60409</id>
        <label>KRTAP10-7</label>
    </interactant>
    <organismsDiffer>false</organismsDiffer>
    <experiments>3</experiments>
</comment>
<comment type="interaction">
    <interactant intactId="EBI-348259">
        <id>Q96EZ8</id>
    </interactant>
    <interactant intactId="EBI-14065470">
        <id>Q9BYR9</id>
        <label>KRTAP2-4</label>
    </interactant>
    <organismsDiffer>false</organismsDiffer>
    <experiments>3</experiments>
</comment>
<comment type="interaction">
    <interactant intactId="EBI-348259">
        <id>Q96EZ8</id>
    </interactant>
    <interactant intactId="EBI-739657">
        <id>Q9BQD3</id>
        <label>KXD1</label>
    </interactant>
    <organismsDiffer>false</organismsDiffer>
    <experiments>4</experiments>
</comment>
<comment type="interaction">
    <interactant intactId="EBI-348259">
        <id>Q96EZ8</id>
    </interactant>
    <interactant intactId="EBI-1216080">
        <id>Q9Y250</id>
        <label>LZTS1</label>
    </interactant>
    <organismsDiffer>false</organismsDiffer>
    <experiments>3</experiments>
</comment>
<comment type="interaction">
    <interactant intactId="EBI-348259">
        <id>Q96EZ8</id>
    </interactant>
    <interactant intactId="EBI-1045155">
        <id>P43360</id>
        <label>MAGEA6</label>
    </interactant>
    <organismsDiffer>false</organismsDiffer>
    <experiments>3</experiments>
</comment>
<comment type="interaction">
    <interactant intactId="EBI-348259">
        <id>Q96EZ8</id>
    </interactant>
    <interactant intactId="EBI-476263">
        <id>Q99683</id>
        <label>MAP3K5</label>
    </interactant>
    <organismsDiffer>false</organismsDiffer>
    <experiments>3</experiments>
</comment>
<comment type="interaction">
    <interactant intactId="EBI-348259">
        <id>Q96EZ8</id>
    </interactant>
    <interactant intactId="EBI-713568">
        <id>P45984</id>
        <label>MAPK9</label>
    </interactant>
    <organismsDiffer>false</organismsDiffer>
    <experiments>3</experiments>
</comment>
<comment type="interaction">
    <interactant intactId="EBI-348259">
        <id>Q96EZ8</id>
    </interactant>
    <interactant intactId="EBI-394607">
        <id>Q9NPJ6</id>
        <label>MED4</label>
    </interactant>
    <organismsDiffer>false</organismsDiffer>
    <experiments>4</experiments>
</comment>
<comment type="interaction">
    <interactant intactId="EBI-348259">
        <id>Q96EZ8</id>
    </interactant>
    <interactant intactId="EBI-2864512">
        <id>P50221</id>
        <label>MEOX1</label>
    </interactant>
    <organismsDiffer>false</organismsDiffer>
    <experiments>3</experiments>
</comment>
<comment type="interaction">
    <interactant intactId="EBI-348259">
        <id>Q96EZ8</id>
    </interactant>
    <interactant intactId="EBI-1048159">
        <id>P55081</id>
        <label>MFAP1</label>
    </interactant>
    <organismsDiffer>false</organismsDiffer>
    <experiments>3</experiments>
</comment>
<comment type="interaction">
    <interactant intactId="EBI-348259">
        <id>Q96EZ8</id>
    </interactant>
    <interactant intactId="EBI-3504938">
        <id>Q8N344</id>
        <label>MIER2</label>
    </interactant>
    <organismsDiffer>false</organismsDiffer>
    <experiments>5</experiments>
</comment>
<comment type="interaction">
    <interactant intactId="EBI-348259">
        <id>Q96EZ8</id>
    </interactant>
    <interactant intactId="EBI-12224671">
        <id>Q7Z3K6-2</id>
        <label>MIER3</label>
    </interactant>
    <organismsDiffer>false</organismsDiffer>
    <experiments>3</experiments>
</comment>
<comment type="interaction">
    <interactant intactId="EBI-348259">
        <id>Q96EZ8</id>
    </interactant>
    <interactant intactId="EBI-747693">
        <id>P41227</id>
        <label>NAA10</label>
    </interactant>
    <organismsDiffer>false</organismsDiffer>
    <experiments>3</experiments>
</comment>
<comment type="interaction">
    <interactant intactId="EBI-348259">
        <id>Q96EZ8</id>
    </interactant>
    <interactant intactId="EBI-8641936">
        <id>Q15742</id>
        <label>NAB2</label>
    </interactant>
    <organismsDiffer>false</organismsDiffer>
    <experiments>3</experiments>
</comment>
<comment type="interaction">
    <interactant intactId="EBI-348259">
        <id>Q96EZ8</id>
    </interactant>
    <interactant intactId="EBI-3920396">
        <id>Q6ZUT1</id>
        <label>NKAPD1</label>
    </interactant>
    <organismsDiffer>false</organismsDiffer>
    <experiments>6</experiments>
</comment>
<comment type="interaction">
    <interactant intactId="EBI-348259">
        <id>Q96EZ8</id>
    </interactant>
    <interactant intactId="EBI-1051317">
        <id>Q9H4L5</id>
        <label>OSBPL3</label>
    </interactant>
    <organismsDiffer>false</organismsDiffer>
    <experiments>3</experiments>
</comment>
<comment type="interaction">
    <interactant intactId="EBI-348259">
        <id>Q96EZ8</id>
    </interactant>
    <interactant intactId="EBI-536853">
        <id>Q96KB5</id>
        <label>PBK</label>
    </interactant>
    <organismsDiffer>false</organismsDiffer>
    <experiments>3</experiments>
</comment>
<comment type="interaction">
    <interactant intactId="EBI-348259">
        <id>Q96EZ8</id>
    </interactant>
    <interactant intactId="EBI-11742977">
        <id>Q15154-3</id>
        <label>PCM1</label>
    </interactant>
    <organismsDiffer>false</organismsDiffer>
    <experiments>3</experiments>
</comment>
<comment type="interaction">
    <interactant intactId="EBI-348259">
        <id>Q96EZ8</id>
    </interactant>
    <interactant intactId="EBI-713786">
        <id>Q8IXK0</id>
        <label>PHC2</label>
    </interactant>
    <organismsDiffer>false</organismsDiffer>
    <experiments>2</experiments>
</comment>
<comment type="interaction">
    <interactant intactId="EBI-348259">
        <id>Q96EZ8</id>
    </interactant>
    <interactant intactId="EBI-14066006">
        <id>Q4G0R1</id>
        <label>PIBF1</label>
    </interactant>
    <organismsDiffer>false</organismsDiffer>
    <experiments>3</experiments>
</comment>
<comment type="interaction">
    <interactant intactId="EBI-348259">
        <id>Q96EZ8</id>
    </interactant>
    <interactant intactId="EBI-2692890">
        <id>Q96KN3</id>
        <label>PKNOX2</label>
    </interactant>
    <organismsDiffer>false</organismsDiffer>
    <experiments>3</experiments>
</comment>
<comment type="interaction">
    <interactant intactId="EBI-348259">
        <id>Q96EZ8</id>
    </interactant>
    <interactant intactId="EBI-1105153">
        <id>Q96KQ4</id>
        <label>PPP1R13B</label>
    </interactant>
    <organismsDiffer>false</organismsDiffer>
    <experiments>3</experiments>
</comment>
<comment type="interaction">
    <interactant intactId="EBI-348259">
        <id>Q96EZ8</id>
    </interactant>
    <interactant intactId="EBI-1050964">
        <id>O43586</id>
        <label>PSTPIP1</label>
    </interactant>
    <organismsDiffer>false</organismsDiffer>
    <experiments>3</experiments>
</comment>
<comment type="interaction">
    <interactant intactId="EBI-348259">
        <id>Q96EZ8</id>
    </interactant>
    <interactant intactId="EBI-447043">
        <id>Q15276</id>
        <label>RABEP1</label>
    </interactant>
    <organismsDiffer>false</organismsDiffer>
    <experiments>3</experiments>
</comment>
<comment type="interaction">
    <interactant intactId="EBI-348259">
        <id>Q96EZ8</id>
    </interactant>
    <interactant intactId="EBI-413374">
        <id>P10276</id>
        <label>RARA</label>
    </interactant>
    <organismsDiffer>false</organismsDiffer>
    <experiments>3</experiments>
</comment>
<comment type="interaction">
    <interactant intactId="EBI-348259">
        <id>Q96EZ8</id>
    </interactant>
    <interactant intactId="EBI-10192441">
        <id>Q86VR2</id>
        <label>RETREG3</label>
    </interactant>
    <organismsDiffer>false</organismsDiffer>
    <experiments>3</experiments>
</comment>
<comment type="interaction">
    <interactant intactId="EBI-348259">
        <id>Q96EZ8</id>
    </interactant>
    <interactant intactId="EBI-12092053">
        <id>P57055</id>
        <label>RIPPLY3</label>
    </interactant>
    <organismsDiffer>false</organismsDiffer>
    <experiments>4</experiments>
</comment>
<comment type="interaction">
    <interactant intactId="EBI-348259">
        <id>Q96EZ8</id>
    </interactant>
    <interactant intactId="EBI-19952306">
        <id>O14492-2</id>
        <label>SH2B2</label>
    </interactant>
    <organismsDiffer>false</organismsDiffer>
    <experiments>3</experiments>
</comment>
<comment type="interaction">
    <interactant intactId="EBI-348259">
        <id>Q96EZ8</id>
    </interactant>
    <interactant intactId="EBI-12004298">
        <id>O75971-2</id>
        <label>SNAPC5</label>
    </interactant>
    <organismsDiffer>false</organismsDiffer>
    <experiments>3</experiments>
</comment>
<comment type="interaction">
    <interactant intactId="EBI-348259">
        <id>Q96EZ8</id>
    </interactant>
    <interactant intactId="EBI-10198587">
        <id>Q02446</id>
        <label>SP4</label>
    </interactant>
    <organismsDiffer>false</organismsDiffer>
    <experiments>3</experiments>
</comment>
<comment type="interaction">
    <interactant intactId="EBI-348259">
        <id>Q96EZ8</id>
    </interactant>
    <interactant intactId="EBI-3867173">
        <id>A7MD48</id>
        <label>SRRM4</label>
    </interactant>
    <organismsDiffer>false</organismsDiffer>
    <experiments>3</experiments>
</comment>
<comment type="interaction">
    <interactant intactId="EBI-348259">
        <id>Q96EZ8</id>
    </interactant>
    <interactant intactId="EBI-17280858">
        <id>Q8WWF3</id>
        <label>SSMEM1</label>
    </interactant>
    <organismsDiffer>false</organismsDiffer>
    <experiments>3</experiments>
</comment>
<comment type="interaction">
    <interactant intactId="EBI-348259">
        <id>Q96EZ8</id>
    </interactant>
    <interactant intactId="EBI-18173581">
        <id>Q86TJ2-3</id>
        <label>TADA2B</label>
    </interactant>
    <organismsDiffer>false</organismsDiffer>
    <experiments>3</experiments>
</comment>
<comment type="interaction">
    <interactant intactId="EBI-348259">
        <id>Q96EZ8</id>
    </interactant>
    <interactant intactId="EBI-1644036">
        <id>Q86TI0</id>
        <label>TBC1D1</label>
    </interactant>
    <organismsDiffer>false</organismsDiffer>
    <experiments>3</experiments>
</comment>
<comment type="interaction">
    <interactant intactId="EBI-348259">
        <id>Q96EZ8</id>
    </interactant>
    <interactant intactId="EBI-2514218">
        <id>Q01664</id>
        <label>TFAP4</label>
    </interactant>
    <organismsDiffer>false</organismsDiffer>
    <experiments>3</experiments>
</comment>
<comment type="interaction">
    <interactant intactId="EBI-348259">
        <id>Q96EZ8</id>
    </interactant>
    <interactant intactId="EBI-11741437">
        <id>Q08117-2</id>
        <label>TLE5</label>
    </interactant>
    <organismsDiffer>false</organismsDiffer>
    <experiments>3</experiments>
</comment>
<comment type="interaction">
    <interactant intactId="EBI-348259">
        <id>Q96EZ8</id>
    </interactant>
    <interactant intactId="EBI-357849">
        <id>Q15025</id>
        <label>TNIP1</label>
    </interactant>
    <organismsDiffer>false</organismsDiffer>
    <experiments>3</experiments>
</comment>
<comment type="interaction">
    <interactant intactId="EBI-348259">
        <id>Q96EZ8</id>
    </interactant>
    <interactant intactId="EBI-746692">
        <id>P19237</id>
        <label>TNNI1</label>
    </interactant>
    <organismsDiffer>false</organismsDiffer>
    <experiments>3</experiments>
</comment>
<comment type="interaction">
    <interactant intactId="EBI-348259">
        <id>Q96EZ8</id>
    </interactant>
    <interactant intactId="EBI-2337775">
        <id>Q9H3D4</id>
        <label>TP63</label>
    </interactant>
    <organismsDiffer>false</organismsDiffer>
    <experiments>3</experiments>
</comment>
<comment type="interaction">
    <interactant intactId="EBI-348259">
        <id>Q96EZ8</id>
    </interactant>
    <interactant intactId="EBI-741602">
        <id>O94972</id>
        <label>TRIM37</label>
    </interactant>
    <organismsDiffer>false</organismsDiffer>
    <experiments>4</experiments>
</comment>
<comment type="interaction">
    <interactant intactId="EBI-348259">
        <id>Q96EZ8</id>
    </interactant>
    <interactant intactId="EBI-725997">
        <id>Q8WV44</id>
        <label>TRIM41</label>
    </interactant>
    <organismsDiffer>false</organismsDiffer>
    <experiments>3</experiments>
</comment>
<comment type="interaction">
    <interactant intactId="EBI-348259">
        <id>Q96EZ8</id>
    </interactant>
    <interactant intactId="EBI-947459">
        <id>Q9H2G4</id>
        <label>TSPYL2</label>
    </interactant>
    <organismsDiffer>false</organismsDiffer>
    <experiments>5</experiments>
</comment>
<comment type="interaction">
    <interactant intactId="EBI-348259">
        <id>Q96EZ8</id>
    </interactant>
    <interactant intactId="EBI-739895">
        <id>Q8N6Y0</id>
        <label>USHBP1</label>
    </interactant>
    <organismsDiffer>false</organismsDiffer>
    <experiments>6</experiments>
</comment>
<comment type="interaction">
    <interactant intactId="EBI-348259">
        <id>Q96EZ8</id>
    </interactant>
    <interactant intactId="EBI-712969">
        <id>Q9Y3C0</id>
        <label>WASHC3</label>
    </interactant>
    <organismsDiffer>false</organismsDiffer>
    <experiments>13</experiments>
</comment>
<comment type="interaction">
    <interactant intactId="EBI-348259">
        <id>Q96EZ8</id>
    </interactant>
    <interactant intactId="EBI-714455">
        <id>Q9Y2W2</id>
        <label>WBP11</label>
    </interactant>
    <organismsDiffer>false</organismsDiffer>
    <experiments>5</experiments>
</comment>
<comment type="interaction">
    <interactant intactId="EBI-348259">
        <id>Q96EZ8</id>
    </interactant>
    <interactant intactId="EBI-517127">
        <id>P98170</id>
        <label>XIAP</label>
    </interactant>
    <organismsDiffer>false</organismsDiffer>
    <experiments>3</experiments>
</comment>
<comment type="interaction">
    <interactant intactId="EBI-348259">
        <id>Q96EZ8</id>
    </interactant>
    <interactant intactId="EBI-723574">
        <id>O15209</id>
        <label>ZBTB22</label>
    </interactant>
    <organismsDiffer>false</organismsDiffer>
    <experiments>6</experiments>
</comment>
<comment type="interaction">
    <interactant intactId="EBI-348259">
        <id>Q96EZ8</id>
    </interactant>
    <interactant intactId="EBI-597063">
        <id>Q8TBK6</id>
        <label>ZCCHC10</label>
    </interactant>
    <organismsDiffer>false</organismsDiffer>
    <experiments>4</experiments>
</comment>
<comment type="interaction">
    <interactant intactId="EBI-348259">
        <id>Q96EZ8</id>
    </interactant>
    <interactant intactId="EBI-748373">
        <id>Q6PEW1</id>
        <label>ZCCHC12</label>
    </interactant>
    <organismsDiffer>false</organismsDiffer>
    <experiments>3</experiments>
</comment>
<comment type="interaction">
    <interactant intactId="EBI-348259">
        <id>Q96EZ8</id>
    </interactant>
    <interactant intactId="EBI-5657766">
        <id>P17027</id>
        <label>ZNF23</label>
    </interactant>
    <organismsDiffer>false</organismsDiffer>
    <experiments>3</experiments>
</comment>
<comment type="interaction">
    <interactant intactId="EBI-348259">
        <id>Q96EZ8</id>
    </interactant>
    <interactant intactId="EBI-947476">
        <id>Q9UID6</id>
        <label>ZNF639</label>
    </interactant>
    <organismsDiffer>false</organismsDiffer>
    <experiments>3</experiments>
</comment>
<comment type="interaction">
    <interactant intactId="EBI-348259">
        <id>Q96EZ8</id>
    </interactant>
    <interactant intactId="EBI-2555757">
        <id>P17098</id>
        <label>ZNF8</label>
    </interactant>
    <organismsDiffer>false</organismsDiffer>
    <experiments>3</experiments>
</comment>
<comment type="interaction">
    <interactant intactId="EBI-348259">
        <id>Q96EZ8</id>
    </interactant>
    <interactant intactId="EBI-527853">
        <id>Q9UGI0</id>
        <label>ZRANB1</label>
    </interactant>
    <organismsDiffer>false</organismsDiffer>
    <experiments>3</experiments>
</comment>
<comment type="interaction">
    <interactant intactId="EBI-348259">
        <id>Q96EZ8</id>
    </interactant>
    <interactant intactId="EBI-25900580">
        <id>Q9Y649</id>
    </interactant>
    <organismsDiffer>false</organismsDiffer>
    <experiments>3</experiments>
</comment>
<comment type="subcellular location">
    <subcellularLocation>
        <location evidence="6 9 10 13 14 16 20">Nucleus</location>
    </subcellularLocation>
    <subcellularLocation>
        <location evidence="10 23">Nucleus</location>
        <location evidence="10 23">Nucleolus</location>
    </subcellularLocation>
    <subcellularLocation>
        <location evidence="10 20">Cytoplasm</location>
    </subcellularLocation>
    <subcellularLocation>
        <location evidence="9">Cytoplasm</location>
        <location evidence="9">Cytoskeleton</location>
        <location evidence="9">Microtubule organizing center</location>
        <location evidence="9">Centrosome</location>
    </subcellularLocation>
    <subcellularLocation>
        <location evidence="9 16 18 20">Cytoplasm</location>
        <location evidence="9 16 18 20">Cytoskeleton</location>
        <location evidence="9 16 18 20">Spindle pole</location>
    </subcellularLocation>
    <subcellularLocation>
        <location evidence="16">Chromosome</location>
        <location evidence="16">Centromere</location>
        <location evidence="16">Kinetochore</location>
    </subcellularLocation>
    <subcellularLocation>
        <location evidence="1">Chromosome</location>
    </subcellularLocation>
    <subcellularLocation>
        <location evidence="17">Lysosome</location>
    </subcellularLocation>
    <subcellularLocation>
        <location evidence="19">Cytoplasm</location>
        <location evidence="19">Cytoskeleton</location>
        <location evidence="19">Microtubule organizing center</location>
        <location evidence="19">Centrosome</location>
        <location evidence="19">Centriolar satellite</location>
    </subcellularLocation>
    <text evidence="1 9 16 17 23">Predominantly concentrated in the nucleus but also localizes to the centrosome (PubMed:16547491). Detected on the spindle poles during mitosis from prometaphase to telophase (PubMed:16547491). Found in microspherules in the nucleolus (PubMed:9654073). Localizes to lysosomes under high amino acid concentration conditions (PubMed:25816988). Localizes to the minus ends of kinetochore fibers and chromosomal microtubules (PubMed:22081094). Present in the nucleus of germinal vesicle oocytes and associates with spindles poles and chromosomes after germinal vesicle breakdown (By similarity).</text>
</comment>
<comment type="alternative products">
    <event type="alternative splicing"/>
    <isoform>
        <id>Q96EZ8-1</id>
        <name>1</name>
        <sequence type="displayed"/>
    </isoform>
    <isoform>
        <id>Q96EZ8-2</id>
        <name>2</name>
        <name>MCRS2</name>
        <sequence type="described" ref="VSP_016260"/>
    </isoform>
    <isoform>
        <id>Q96EZ8-3</id>
        <name>3</name>
        <sequence type="described" ref="VSP_016259"/>
    </isoform>
    <isoform>
        <id>Q96EZ8-4</id>
        <name>4</name>
        <sequence type="described" ref="VSP_054571"/>
    </isoform>
</comment>
<comment type="tissue specificity">
    <text>Detected in testis, and at lower levels in spleen, thymus, prostate, uterus, small intestine, colon and leukocytes.</text>
</comment>
<comment type="developmental stage">
    <text>Cell-cycle regulated: levels are highest early in S phase; not detectable in G2.</text>
</comment>
<comment type="domain">
    <text evidence="9">The N-terminal region is required for nuclear localization while the C-terminal region encompassing the FHA domain is required for centrosomal localization.</text>
</comment>
<comment type="PTM">
    <text evidence="22">Ubiquitinated by UBR5 when not assembled in the INO80 complex, leading to its degradation: UBR5 recognizes and binds a degron that is not accessible when MCRS1 is part of the INO80 complex.</text>
</comment>
<comment type="PTM">
    <text evidence="18 20">Phosphorylated by AURKA on Ser-35 and/or Ser-36 during mitosis which is required for kinetochore fiber assembly and mitotic progression but not for spindle localization or for chromosome-induced microtuble aster formation (PubMed:27192185). Also phosphorylated by AURKA on Ser-85 and/or Ser-87 (PubMed:27192185). Phosphorylated by TTK/MPS1 which enhances recruitment of KIF2A to the minus end of spindle microtubules and facilitates precise chromosome segregation (PubMed:30785839).</text>
</comment>
<comment type="miscellaneous">
    <molecule>Isoform 3</molecule>
    <text evidence="27">May be due to intron retention.</text>
</comment>
<comment type="sequence caution" evidence="27">
    <conflict type="frameshift">
        <sequence resource="EMBL-CDS" id="AAC68599"/>
    </conflict>
</comment>
<keyword id="KW-0007">Acetylation</keyword>
<keyword id="KW-0025">Alternative splicing</keyword>
<keyword id="KW-0137">Centromere</keyword>
<keyword id="KW-0156">Chromatin regulator</keyword>
<keyword id="KW-0158">Chromosome</keyword>
<keyword id="KW-0175">Coiled coil</keyword>
<keyword id="KW-0963">Cytoplasm</keyword>
<keyword id="KW-0206">Cytoskeleton</keyword>
<keyword id="KW-0227">DNA damage</keyword>
<keyword id="KW-0233">DNA recombination</keyword>
<keyword id="KW-0234">DNA repair</keyword>
<keyword id="KW-0945">Host-virus interaction</keyword>
<keyword id="KW-0995">Kinetochore</keyword>
<keyword id="KW-0458">Lysosome</keyword>
<keyword id="KW-0539">Nucleus</keyword>
<keyword id="KW-0597">Phosphoprotein</keyword>
<keyword id="KW-1267">Proteomics identification</keyword>
<keyword id="KW-1185">Reference proteome</keyword>
<keyword id="KW-0804">Transcription</keyword>
<keyword id="KW-0805">Transcription regulation</keyword>
<keyword id="KW-0832">Ubl conjugation</keyword>
<proteinExistence type="evidence at protein level"/>
<reference key="1">
    <citation type="journal article" date="1998" name="Eur. J. Biochem.">
        <title>The 58-kDa microspherule protein (MSP58), a nucleolar protein, interacts with nucleolar protein p120.</title>
        <authorList>
            <person name="Ren Y."/>
            <person name="Busch R.K."/>
            <person name="Perlaky L."/>
            <person name="Busch H."/>
        </authorList>
    </citation>
    <scope>NUCLEOTIDE SEQUENCE [MRNA] (ISOFORM 1)</scope>
    <scope>INTERACTION WITH NOP2</scope>
    <scope>SUBCELLULAR LOCATION</scope>
    <source>
        <tissue>Cervix carcinoma</tissue>
    </source>
</reference>
<reference key="2">
    <citation type="journal article" date="1998" name="J. Virol.">
        <title>Herpes simplex virus 1 regulatory protein ICP22 interacts with a new cell cycle-regulated factor and accumulates in a cell cycle-dependent fashion in infected cells.</title>
        <authorList>
            <person name="Bruni R."/>
            <person name="Roizman B."/>
        </authorList>
    </citation>
    <scope>NUCLEOTIDE SEQUENCE [MRNA] (ISOFORM 3)</scope>
    <scope>INTERACTION WITH ICP22</scope>
    <source>
        <tissue>Cervix carcinoma</tissue>
    </source>
</reference>
<reference key="3">
    <citation type="journal article" date="2004" name="Biochem. Biophys. Res. Commun.">
        <title>Human MCRS2, a cell-cycle-dependent protein, associates with LPTS/PinX1 and reduces the telomere length.</title>
        <authorList>
            <person name="Song H."/>
            <person name="Li Y."/>
            <person name="Chen G."/>
            <person name="Xing Z."/>
            <person name="Zhao J."/>
            <person name="Yokoyama K.K."/>
            <person name="Li T."/>
            <person name="Zhao M."/>
        </authorList>
    </citation>
    <scope>NUCLEOTIDE SEQUENCE [MRNA] (ISOFORM 2)</scope>
    <scope>SUBCELLULAR LOCATION</scope>
    <scope>INTERACTION WITH PINX1 AND TERT</scope>
    <scope>FUNCTION</scope>
</reference>
<reference key="4">
    <citation type="submission" date="2005-02" db="EMBL/GenBank/DDBJ databases">
        <authorList>
            <consortium name="The German cDNA Consortium"/>
            <person name="Bloecker H."/>
            <person name="Boecher M."/>
            <person name="Brandt P."/>
            <person name="Mewes H.W."/>
            <person name="Weil B."/>
            <person name="Amid C."/>
            <person name="Osanger A."/>
            <person name="Fobo G."/>
            <person name="Han M."/>
            <person name="Wiemann S."/>
        </authorList>
    </citation>
    <scope>NUCLEOTIDE SEQUENCE [LARGE SCALE MRNA]</scope>
    <source>
        <tissue>Rectum tumor</tissue>
    </source>
</reference>
<reference key="5">
    <citation type="journal article" date="2006" name="Nature">
        <title>The finished DNA sequence of human chromosome 12.</title>
        <authorList>
            <person name="Scherer S.E."/>
            <person name="Muzny D.M."/>
            <person name="Buhay C.J."/>
            <person name="Chen R."/>
            <person name="Cree A."/>
            <person name="Ding Y."/>
            <person name="Dugan-Rocha S."/>
            <person name="Gill R."/>
            <person name="Gunaratne P."/>
            <person name="Harris R.A."/>
            <person name="Hawes A.C."/>
            <person name="Hernandez J."/>
            <person name="Hodgson A.V."/>
            <person name="Hume J."/>
            <person name="Jackson A."/>
            <person name="Khan Z.M."/>
            <person name="Kovar-Smith C."/>
            <person name="Lewis L.R."/>
            <person name="Lozado R.J."/>
            <person name="Metzker M.L."/>
            <person name="Milosavljevic A."/>
            <person name="Miner G.R."/>
            <person name="Montgomery K.T."/>
            <person name="Morgan M.B."/>
            <person name="Nazareth L.V."/>
            <person name="Scott G."/>
            <person name="Sodergren E."/>
            <person name="Song X.-Z."/>
            <person name="Steffen D."/>
            <person name="Lovering R.C."/>
            <person name="Wheeler D.A."/>
            <person name="Worley K.C."/>
            <person name="Yuan Y."/>
            <person name="Zhang Z."/>
            <person name="Adams C.Q."/>
            <person name="Ansari-Lari M.A."/>
            <person name="Ayele M."/>
            <person name="Brown M.J."/>
            <person name="Chen G."/>
            <person name="Chen Z."/>
            <person name="Clerc-Blankenburg K.P."/>
            <person name="Davis C."/>
            <person name="Delgado O."/>
            <person name="Dinh H.H."/>
            <person name="Draper H."/>
            <person name="Gonzalez-Garay M.L."/>
            <person name="Havlak P."/>
            <person name="Jackson L.R."/>
            <person name="Jacob L.S."/>
            <person name="Kelly S.H."/>
            <person name="Li L."/>
            <person name="Li Z."/>
            <person name="Liu J."/>
            <person name="Liu W."/>
            <person name="Lu J."/>
            <person name="Maheshwari M."/>
            <person name="Nguyen B.-V."/>
            <person name="Okwuonu G.O."/>
            <person name="Pasternak S."/>
            <person name="Perez L.M."/>
            <person name="Plopper F.J.H."/>
            <person name="Santibanez J."/>
            <person name="Shen H."/>
            <person name="Tabor P.E."/>
            <person name="Verduzco D."/>
            <person name="Waldron L."/>
            <person name="Wang Q."/>
            <person name="Williams G.A."/>
            <person name="Zhang J."/>
            <person name="Zhou J."/>
            <person name="Allen C.C."/>
            <person name="Amin A.G."/>
            <person name="Anyalebechi V."/>
            <person name="Bailey M."/>
            <person name="Barbaria J.A."/>
            <person name="Bimage K.E."/>
            <person name="Bryant N.P."/>
            <person name="Burch P.E."/>
            <person name="Burkett C.E."/>
            <person name="Burrell K.L."/>
            <person name="Calderon E."/>
            <person name="Cardenas V."/>
            <person name="Carter K."/>
            <person name="Casias K."/>
            <person name="Cavazos I."/>
            <person name="Cavazos S.R."/>
            <person name="Ceasar H."/>
            <person name="Chacko J."/>
            <person name="Chan S.N."/>
            <person name="Chavez D."/>
            <person name="Christopoulos C."/>
            <person name="Chu J."/>
            <person name="Cockrell R."/>
            <person name="Cox C.D."/>
            <person name="Dang M."/>
            <person name="Dathorne S.R."/>
            <person name="David R."/>
            <person name="Davis C.M."/>
            <person name="Davy-Carroll L."/>
            <person name="Deshazo D.R."/>
            <person name="Donlin J.E."/>
            <person name="D'Souza L."/>
            <person name="Eaves K.A."/>
            <person name="Egan A."/>
            <person name="Emery-Cohen A.J."/>
            <person name="Escotto M."/>
            <person name="Flagg N."/>
            <person name="Forbes L.D."/>
            <person name="Gabisi A.M."/>
            <person name="Garza M."/>
            <person name="Hamilton C."/>
            <person name="Henderson N."/>
            <person name="Hernandez O."/>
            <person name="Hines S."/>
            <person name="Hogues M.E."/>
            <person name="Huang M."/>
            <person name="Idlebird D.G."/>
            <person name="Johnson R."/>
            <person name="Jolivet A."/>
            <person name="Jones S."/>
            <person name="Kagan R."/>
            <person name="King L.M."/>
            <person name="Leal B."/>
            <person name="Lebow H."/>
            <person name="Lee S."/>
            <person name="LeVan J.M."/>
            <person name="Lewis L.C."/>
            <person name="London P."/>
            <person name="Lorensuhewa L.M."/>
            <person name="Loulseged H."/>
            <person name="Lovett D.A."/>
            <person name="Lucier A."/>
            <person name="Lucier R.L."/>
            <person name="Ma J."/>
            <person name="Madu R.C."/>
            <person name="Mapua P."/>
            <person name="Martindale A.D."/>
            <person name="Martinez E."/>
            <person name="Massey E."/>
            <person name="Mawhiney S."/>
            <person name="Meador M.G."/>
            <person name="Mendez S."/>
            <person name="Mercado C."/>
            <person name="Mercado I.C."/>
            <person name="Merritt C.E."/>
            <person name="Miner Z.L."/>
            <person name="Minja E."/>
            <person name="Mitchell T."/>
            <person name="Mohabbat F."/>
            <person name="Mohabbat K."/>
            <person name="Montgomery B."/>
            <person name="Moore N."/>
            <person name="Morris S."/>
            <person name="Munidasa M."/>
            <person name="Ngo R.N."/>
            <person name="Nguyen N.B."/>
            <person name="Nickerson E."/>
            <person name="Nwaokelemeh O.O."/>
            <person name="Nwokenkwo S."/>
            <person name="Obregon M."/>
            <person name="Oguh M."/>
            <person name="Oragunye N."/>
            <person name="Oviedo R.J."/>
            <person name="Parish B.J."/>
            <person name="Parker D.N."/>
            <person name="Parrish J."/>
            <person name="Parks K.L."/>
            <person name="Paul H.A."/>
            <person name="Payton B.A."/>
            <person name="Perez A."/>
            <person name="Perrin W."/>
            <person name="Pickens A."/>
            <person name="Primus E.L."/>
            <person name="Pu L.-L."/>
            <person name="Puazo M."/>
            <person name="Quiles M.M."/>
            <person name="Quiroz J.B."/>
            <person name="Rabata D."/>
            <person name="Reeves K."/>
            <person name="Ruiz S.J."/>
            <person name="Shao H."/>
            <person name="Sisson I."/>
            <person name="Sonaike T."/>
            <person name="Sorelle R.P."/>
            <person name="Sutton A.E."/>
            <person name="Svatek A.F."/>
            <person name="Svetz L.A."/>
            <person name="Tamerisa K.S."/>
            <person name="Taylor T.R."/>
            <person name="Teague B."/>
            <person name="Thomas N."/>
            <person name="Thorn R.D."/>
            <person name="Trejos Z.Y."/>
            <person name="Trevino B.K."/>
            <person name="Ukegbu O.N."/>
            <person name="Urban J.B."/>
            <person name="Vasquez L.I."/>
            <person name="Vera V.A."/>
            <person name="Villasana D.M."/>
            <person name="Wang L."/>
            <person name="Ward-Moore S."/>
            <person name="Warren J.T."/>
            <person name="Wei X."/>
            <person name="White F."/>
            <person name="Williamson A.L."/>
            <person name="Wleczyk R."/>
            <person name="Wooden H.S."/>
            <person name="Wooden S.H."/>
            <person name="Yen J."/>
            <person name="Yoon L."/>
            <person name="Yoon V."/>
            <person name="Zorrilla S.E."/>
            <person name="Nelson D."/>
            <person name="Kucherlapati R."/>
            <person name="Weinstock G."/>
            <person name="Gibbs R.A."/>
        </authorList>
    </citation>
    <scope>NUCLEOTIDE SEQUENCE [LARGE SCALE GENOMIC DNA]</scope>
</reference>
<reference key="6">
    <citation type="submission" date="2005-07" db="EMBL/GenBank/DDBJ databases">
        <authorList>
            <person name="Mural R.J."/>
            <person name="Istrail S."/>
            <person name="Sutton G."/>
            <person name="Florea L."/>
            <person name="Halpern A.L."/>
            <person name="Mobarry C.M."/>
            <person name="Lippert R."/>
            <person name="Walenz B."/>
            <person name="Shatkay H."/>
            <person name="Dew I."/>
            <person name="Miller J.R."/>
            <person name="Flanigan M.J."/>
            <person name="Edwards N.J."/>
            <person name="Bolanos R."/>
            <person name="Fasulo D."/>
            <person name="Halldorsson B.V."/>
            <person name="Hannenhalli S."/>
            <person name="Turner R."/>
            <person name="Yooseph S."/>
            <person name="Lu F."/>
            <person name="Nusskern D.R."/>
            <person name="Shue B.C."/>
            <person name="Zheng X.H."/>
            <person name="Zhong F."/>
            <person name="Delcher A.L."/>
            <person name="Huson D.H."/>
            <person name="Kravitz S.A."/>
            <person name="Mouchard L."/>
            <person name="Reinert K."/>
            <person name="Remington K.A."/>
            <person name="Clark A.G."/>
            <person name="Waterman M.S."/>
            <person name="Eichler E.E."/>
            <person name="Adams M.D."/>
            <person name="Hunkapiller M.W."/>
            <person name="Myers E.W."/>
            <person name="Venter J.C."/>
        </authorList>
    </citation>
    <scope>NUCLEOTIDE SEQUENCE [LARGE SCALE GENOMIC DNA]</scope>
</reference>
<reference key="7">
    <citation type="journal article" date="2004" name="Genome Res.">
        <title>The status, quality, and expansion of the NIH full-length cDNA project: the Mammalian Gene Collection (MGC).</title>
        <authorList>
            <consortium name="The MGC Project Team"/>
        </authorList>
    </citation>
    <scope>NUCLEOTIDE SEQUENCE [LARGE SCALE MRNA] (ISOFORM 1)</scope>
    <source>
        <tissue>Uterus</tissue>
    </source>
</reference>
<reference key="8">
    <citation type="journal article" date="2002" name="J. Biol. Chem.">
        <title>Essential role of the 58-kDa microspherule protein in the modulation of Daxx-dependent transcriptional repression as revealed by nucleolar sequestration.</title>
        <authorList>
            <person name="Lin D.-Y."/>
            <person name="Shih H.-M."/>
        </authorList>
    </citation>
    <scope>FUNCTION</scope>
    <scope>INTERACTION WITH DAXX</scope>
</reference>
<reference key="9">
    <citation type="journal article" date="2005" name="Cell">
        <title>Physical association and coordinate function of the H3 K4 methyltransferase MLL1 and the H4 K16 acetyltransferase MOF.</title>
        <authorList>
            <person name="Dou Y."/>
            <person name="Milne T.A."/>
            <person name="Tackett A.J."/>
            <person name="Smith E.R."/>
            <person name="Fukuda A."/>
            <person name="Wysocka J."/>
            <person name="Allis C.D."/>
            <person name="Chait B.T."/>
            <person name="Hess J.L."/>
            <person name="Roeder R.G."/>
        </authorList>
    </citation>
    <scope>IDENTIFICATION IN THE MLL1/MLL COMPLEX</scope>
</reference>
<reference key="10">
    <citation type="journal article" date="2005" name="J. Biol. Chem.">
        <title>A mammalian chromatin remodeling complex with similarities to the yeast INO80 complex.</title>
        <authorList>
            <person name="Jin J."/>
            <person name="Cai Y."/>
            <person name="Yao T."/>
            <person name="Gottschalk A.J."/>
            <person name="Florens L."/>
            <person name="Swanson S.K."/>
            <person name="Gutierrez J.L."/>
            <person name="Coleman M.K."/>
            <person name="Workman J.L."/>
            <person name="Mushegian A."/>
            <person name="Washburn M.P."/>
            <person name="Conaway R.C."/>
            <person name="Conaway J.W."/>
        </authorList>
    </citation>
    <scope>IDENTIFICATION IN INO80 COMPLEX</scope>
    <scope>IDENTIFICATION BY MASS SPECTROMETRY</scope>
</reference>
<reference key="11">
    <citation type="journal article" date="2006" name="Exp. Mol. Pathol.">
        <title>DIPA, which can localize to the centrosome, associates with p78/MCRS1/MSP58 and acts as a repressor of gene transcription.</title>
        <authorList>
            <person name="Du X."/>
            <person name="Wang Q."/>
            <person name="Hirohashi Y."/>
            <person name="Greene M.I."/>
        </authorList>
    </citation>
    <scope>INTERACTION WITH CCDC85B</scope>
</reference>
<reference key="12">
    <citation type="journal article" date="2006" name="Hum. Mol. Genet.">
        <title>The nuclear microspherule protein 58 is a novel RNA-binding protein that interacts with fragile X mental retardation protein in polyribosomal mRNPs from neurons.</title>
        <authorList>
            <person name="Davidovic L."/>
            <person name="Bechara E."/>
            <person name="Gravel M."/>
            <person name="Jaglin X.H."/>
            <person name="Tremblay S."/>
            <person name="Sik A."/>
            <person name="Bardoni B."/>
            <person name="Khandjian E.W."/>
        </authorList>
    </citation>
    <scope>INTERACTION WITH FMR1; FXR1 AND FXR2</scope>
    <scope>RNA-BINDING</scope>
    <scope>SUBCELLULAR LOCATION</scope>
</reference>
<reference key="13">
    <citation type="journal article" date="2006" name="Nat. Biotechnol.">
        <title>A probability-based approach for high-throughput protein phosphorylation analysis and site localization.</title>
        <authorList>
            <person name="Beausoleil S.A."/>
            <person name="Villen J."/>
            <person name="Gerber S.A."/>
            <person name="Rush J."/>
            <person name="Gygi S.P."/>
        </authorList>
    </citation>
    <scope>PHOSPHORYLATION [LARGE SCALE ANALYSIS] AT THR-103 AND SER-108</scope>
    <scope>IDENTIFICATION BY MASS SPECTROMETRY [LARGE SCALE ANALYSIS]</scope>
    <source>
        <tissue>Cervix carcinoma</tissue>
    </source>
</reference>
<reference key="14">
    <citation type="journal article" date="2006" name="Oncogene">
        <title>p78/MCRS1 forms a complex with centrosomal protein Nde1 and is essential for cell viability.</title>
        <authorList>
            <person name="Hirohashi Y."/>
            <person name="Wang Q."/>
            <person name="Liu Q."/>
            <person name="Du X."/>
            <person name="Zhang H."/>
            <person name="Sato N."/>
            <person name="Greene M.I."/>
        </authorList>
    </citation>
    <scope>FUNCTION</scope>
    <scope>INTERACTION WITH NDE1 AND ZNF365</scope>
    <scope>SUBCELLULAR LOCATION</scope>
    <scope>DOMAIN</scope>
</reference>
<reference key="15">
    <citation type="journal article" date="2008" name="Mol. Cell">
        <title>Distinct modes of regulation of the Uch37 deubiquitinating enzyme in the proteasome and in the Ino80 chromatin-remodeling complex.</title>
        <authorList>
            <person name="Yao T."/>
            <person name="Song L."/>
            <person name="Jin J."/>
            <person name="Cai Y."/>
            <person name="Takahashi H."/>
            <person name="Swanson S.K."/>
            <person name="Washburn M.P."/>
            <person name="Florens L."/>
            <person name="Conaway R.C."/>
            <person name="Cohen R.E."/>
            <person name="Conaway J.W."/>
        </authorList>
    </citation>
    <scope>IDENTIFICATION IN THE INO80 COMPLEX</scope>
    <scope>SUBCELLULAR LOCATION</scope>
    <scope>IDENTIFICATION BY MASS SPECTROMETRY</scope>
</reference>
<reference key="16">
    <citation type="journal article" date="2008" name="Proc. Natl. Acad. Sci. U.S.A.">
        <title>A quantitative atlas of mitotic phosphorylation.</title>
        <authorList>
            <person name="Dephoure N."/>
            <person name="Zhou C."/>
            <person name="Villen J."/>
            <person name="Beausoleil S.A."/>
            <person name="Bakalarski C.E."/>
            <person name="Elledge S.J."/>
            <person name="Gygi S.P."/>
        </authorList>
    </citation>
    <scope>PHOSPHORYLATION [LARGE SCALE ANALYSIS] AT SER-108 AND SER-282</scope>
    <scope>IDENTIFICATION BY MASS SPECTROMETRY [LARGE SCALE ANALYSIS]</scope>
    <source>
        <tissue>Cervix carcinoma</tissue>
    </source>
</reference>
<reference key="17">
    <citation type="journal article" date="2009" name="Anal. Chem.">
        <title>Lys-N and trypsin cover complementary parts of the phosphoproteome in a refined SCX-based approach.</title>
        <authorList>
            <person name="Gauci S."/>
            <person name="Helbig A.O."/>
            <person name="Slijper M."/>
            <person name="Krijgsveld J."/>
            <person name="Heck A.J."/>
            <person name="Mohammed S."/>
        </authorList>
    </citation>
    <scope>IDENTIFICATION BY MASS SPECTROMETRY [LARGE SCALE ANALYSIS]</scope>
</reference>
<reference key="18">
    <citation type="journal article" date="2009" name="Sci. Signal.">
        <title>Quantitative phosphoproteomic analysis of T cell receptor signaling reveals system-wide modulation of protein-protein interactions.</title>
        <authorList>
            <person name="Mayya V."/>
            <person name="Lundgren D.H."/>
            <person name="Hwang S.-I."/>
            <person name="Rezaul K."/>
            <person name="Wu L."/>
            <person name="Eng J.K."/>
            <person name="Rodionov V."/>
            <person name="Han D.K."/>
        </authorList>
    </citation>
    <scope>PHOSPHORYLATION [LARGE SCALE ANALYSIS] AT SER-108 AND SER-282</scope>
    <scope>IDENTIFICATION BY MASS SPECTROMETRY [LARGE SCALE ANALYSIS]</scope>
    <source>
        <tissue>Leukemic T-cell</tissue>
    </source>
</reference>
<reference key="19">
    <citation type="journal article" date="2009" name="Science">
        <title>Lysine acetylation targets protein complexes and co-regulates major cellular functions.</title>
        <authorList>
            <person name="Choudhary C."/>
            <person name="Kumar C."/>
            <person name="Gnad F."/>
            <person name="Nielsen M.L."/>
            <person name="Rehman M."/>
            <person name="Walther T.C."/>
            <person name="Olsen J.V."/>
            <person name="Mann M."/>
        </authorList>
    </citation>
    <scope>ACETYLATION [LARGE SCALE ANALYSIS] AT LYS-123 AND LYS-130</scope>
    <scope>IDENTIFICATION BY MASS SPECTROMETRY [LARGE SCALE ANALYSIS]</scope>
</reference>
<reference key="20">
    <citation type="journal article" date="2010" name="J. Biol. Chem.">
        <title>Subunit composition and substrate specificity of a MOF-containing histone acetyltransferase distinct from the male-specific lethal (MSL) complex.</title>
        <authorList>
            <person name="Cai Y."/>
            <person name="Jin J."/>
            <person name="Swanson S.K."/>
            <person name="Cole M.D."/>
            <person name="Choi S.H."/>
            <person name="Florens L."/>
            <person name="Washburn M.P."/>
            <person name="Conaway J.W."/>
            <person name="Conaway R.C."/>
        </authorList>
    </citation>
    <scope>FUNCTION IN HISTONE H4 ACETYLATION</scope>
    <scope>IDENTIFICATION IN NSL COMPLEX</scope>
    <scope>SUBCELLULAR LOCATION</scope>
</reference>
<reference key="21">
    <citation type="journal article" date="2010" name="Sci. Signal.">
        <title>Quantitative phosphoproteomics reveals widespread full phosphorylation site occupancy during mitosis.</title>
        <authorList>
            <person name="Olsen J.V."/>
            <person name="Vermeulen M."/>
            <person name="Santamaria A."/>
            <person name="Kumar C."/>
            <person name="Miller M.L."/>
            <person name="Jensen L.J."/>
            <person name="Gnad F."/>
            <person name="Cox J."/>
            <person name="Jensen T.S."/>
            <person name="Nigg E.A."/>
            <person name="Brunak S."/>
            <person name="Mann M."/>
        </authorList>
    </citation>
    <scope>PHOSPHORYLATION [LARGE SCALE ANALYSIS] AT SER-22; SER-108 AND SER-282</scope>
    <scope>IDENTIFICATION BY MASS SPECTROMETRY [LARGE SCALE ANALYSIS]</scope>
    <source>
        <tissue>Cervix carcinoma</tissue>
    </source>
</reference>
<reference key="22">
    <citation type="journal article" date="2011" name="J. Biol. Chem.">
        <title>Subunit organization of the human INO80 chromatin remodeling complex: An evolutionarily conserved core complex catalyzes ATP-dependent nucleosome remodeling.</title>
        <authorList>
            <person name="Chen L."/>
            <person name="Cai Y."/>
            <person name="Jin J."/>
            <person name="Florens L."/>
            <person name="Swanson S.K."/>
            <person name="Washburn M.P."/>
            <person name="Conaway J.W."/>
            <person name="Conaway R.C."/>
        </authorList>
    </citation>
    <scope>IDENTIFICATION IN THE INO80 COMPLEX</scope>
</reference>
<reference key="23">
    <citation type="journal article" date="2011" name="Nat. Cell Biol.">
        <title>K-fibre minus ends are stabilized by a RanGTP-dependent mechanism essential for functional spindle assembly.</title>
        <authorList>
            <person name="Meunier S."/>
            <person name="Vernos I."/>
        </authorList>
    </citation>
    <scope>FUNCTION</scope>
    <scope>SUBCELLULAR LOCATION</scope>
</reference>
<reference key="24">
    <citation type="journal article" date="2011" name="Sci. Signal.">
        <title>System-wide temporal characterization of the proteome and phosphoproteome of human embryonic stem cell differentiation.</title>
        <authorList>
            <person name="Rigbolt K.T."/>
            <person name="Prokhorova T.A."/>
            <person name="Akimov V."/>
            <person name="Henningsen J."/>
            <person name="Johansen P.T."/>
            <person name="Kratchmarova I."/>
            <person name="Kassem M."/>
            <person name="Mann M."/>
            <person name="Olsen J.V."/>
            <person name="Blagoev B."/>
        </authorList>
    </citation>
    <scope>PHOSPHORYLATION [LARGE SCALE ANALYSIS] AT SER-282</scope>
    <scope>IDENTIFICATION BY MASS SPECTROMETRY [LARGE SCALE ANALYSIS]</scope>
</reference>
<reference key="25">
    <citation type="journal article" date="2012" name="Proc. Natl. Acad. Sci. U.S.A.">
        <title>N-terminal acetylome analyses and functional insights of the N-terminal acetyltransferase NatB.</title>
        <authorList>
            <person name="Van Damme P."/>
            <person name="Lasa M."/>
            <person name="Polevoda B."/>
            <person name="Gazquez C."/>
            <person name="Elosegui-Artola A."/>
            <person name="Kim D.S."/>
            <person name="De Juan-Pardo E."/>
            <person name="Demeyer K."/>
            <person name="Hole K."/>
            <person name="Larrea E."/>
            <person name="Timmerman E."/>
            <person name="Prieto J."/>
            <person name="Arnesen T."/>
            <person name="Sherman F."/>
            <person name="Gevaert K."/>
            <person name="Aldabe R."/>
        </authorList>
    </citation>
    <scope>ACETYLATION [LARGE SCALE ANALYSIS] AT MET-1</scope>
    <scope>IDENTIFICATION BY MASS SPECTROMETRY [LARGE SCALE ANALYSIS]</scope>
</reference>
<reference key="26">
    <citation type="journal article" date="2013" name="J. Proteome Res.">
        <title>Toward a comprehensive characterization of a human cancer cell phosphoproteome.</title>
        <authorList>
            <person name="Zhou H."/>
            <person name="Di Palma S."/>
            <person name="Preisinger C."/>
            <person name="Peng M."/>
            <person name="Polat A.N."/>
            <person name="Heck A.J."/>
            <person name="Mohammed S."/>
        </authorList>
    </citation>
    <scope>PHOSPHORYLATION [LARGE SCALE ANALYSIS] AT SER-108 AND SER-282</scope>
    <scope>IDENTIFICATION BY MASS SPECTROMETRY [LARGE SCALE ANALYSIS]</scope>
    <source>
        <tissue>Cervix carcinoma</tissue>
        <tissue>Erythroleukemia</tissue>
    </source>
</reference>
<reference key="27">
    <citation type="journal article" date="2014" name="J. Proteomics">
        <title>An enzyme assisted RP-RPLC approach for in-depth analysis of human liver phosphoproteome.</title>
        <authorList>
            <person name="Bian Y."/>
            <person name="Song C."/>
            <person name="Cheng K."/>
            <person name="Dong M."/>
            <person name="Wang F."/>
            <person name="Huang J."/>
            <person name="Sun D."/>
            <person name="Wang L."/>
            <person name="Ye M."/>
            <person name="Zou H."/>
        </authorList>
    </citation>
    <scope>PHOSPHORYLATION [LARGE SCALE ANALYSIS] AT SER-282</scope>
    <scope>IDENTIFICATION BY MASS SPECTROMETRY [LARGE SCALE ANALYSIS]</scope>
    <source>
        <tissue>Liver</tissue>
    </source>
</reference>
<reference key="28">
    <citation type="journal article" date="2015" name="Dev. Cell">
        <title>MCRS1 binds and couples Rheb to amino acid-dependent mTORC1 activation.</title>
        <authorList>
            <person name="Fawal M.A."/>
            <person name="Brandt M."/>
            <person name="Djouder N."/>
        </authorList>
    </citation>
    <scope>FUNCTION</scope>
    <scope>INTERACTION WITH MTORC1 COMPLEX AND RHEB</scope>
    <scope>SUBCELLULAR LOCATION</scope>
</reference>
<reference key="29">
    <citation type="journal article" date="2016" name="Cell Cycle">
        <title>Aurora-A regulates MCRS1 function during mitosis.</title>
        <authorList>
            <person name="Meunier S."/>
            <person name="Timon K."/>
            <person name="Vernos I."/>
        </authorList>
    </citation>
    <scope>FUNCTION</scope>
    <scope>SUBCELLULAR LOCATION</scope>
    <scope>PHOSPHORYLATION</scope>
    <scope>MUTAGENESIS OF 35-SER-SER-36</scope>
</reference>
<reference key="30">
    <citation type="journal article" date="2016" name="Sci. Rep.">
        <title>MCRS1 associates with cytoplasmic dynein and mediates pericentrosomal material recruitment.</title>
        <authorList>
            <person name="Lee S.H."/>
            <person name="Lee M.S."/>
            <person name="Choi T.I."/>
            <person name="Hong H."/>
            <person name="Seo J.Y."/>
            <person name="Kim C.H."/>
            <person name="Kim J."/>
        </authorList>
    </citation>
    <scope>FUNCTION</scope>
    <scope>INTERACTION WITH DYNC1I1 AND TTBK2</scope>
    <scope>SUBCELLULAR LOCATION</scope>
</reference>
<reference key="31">
    <citation type="journal article" date="2019" name="Mol. Biol. Cell">
        <title>Mps1 regulates spindle morphology through MCRS1 to promote chromosome alignment.</title>
        <authorList>
            <person name="Yang H."/>
            <person name="Zhang F."/>
            <person name="Huang C.J."/>
            <person name="Liao J."/>
            <person name="Han Y."/>
            <person name="Hao P."/>
            <person name="Chu Y."/>
            <person name="Lu X."/>
            <person name="Li W."/>
            <person name="Yu H."/>
            <person name="Kang J."/>
        </authorList>
    </citation>
    <scope>FUNCTION</scope>
    <scope>INTERACTION WITH KIF2A</scope>
    <scope>SUBCELLULAR LOCATION</scope>
    <scope>PHOSPHORYLATION</scope>
    <scope>MUTAGENESIS OF 64-SER-SER-65 AND SER-65</scope>
</reference>
<reference key="32">
    <citation type="journal article" date="2023" name="Cell">
        <title>Orphan quality control shapes network dynamics and gene expression.</title>
        <authorList>
            <person name="Mark K.G."/>
            <person name="Kolla S."/>
            <person name="Aguirre J.D."/>
            <person name="Garshott D.M."/>
            <person name="Schmitt S."/>
            <person name="Haakonsen D.L."/>
            <person name="Xu C."/>
            <person name="Kater L."/>
            <person name="Kempf G."/>
            <person name="Martinez-Gonzalez B."/>
            <person name="Akopian D."/>
            <person name="See S.K."/>
            <person name="Thomae N.H."/>
            <person name="Rape M."/>
        </authorList>
    </citation>
    <scope>UBIQUITINATION</scope>
</reference>
<reference key="33">
    <citation type="journal article" date="2023" name="Mol. Biol. Cell">
        <title>MCRS1 modulates the heterogeneity of microtubule minus-end morphologies in mitotic spindles.</title>
        <authorList>
            <person name="Laguillo-Diego A."/>
            <person name="Kiewisz R."/>
            <person name="Marti-Gomez C."/>
            <person name="Baum D."/>
            <person name="Mueller-Reichert T."/>
            <person name="Vernos I."/>
        </authorList>
    </citation>
    <scope>FUNCTION</scope>
</reference>
<reference key="34">
    <citation type="journal article" date="2006" name="Science">
        <title>The consensus coding sequences of human breast and colorectal cancers.</title>
        <authorList>
            <person name="Sjoeblom T."/>
            <person name="Jones S."/>
            <person name="Wood L.D."/>
            <person name="Parsons D.W."/>
            <person name="Lin J."/>
            <person name="Barber T.D."/>
            <person name="Mandelker D."/>
            <person name="Leary R.J."/>
            <person name="Ptak J."/>
            <person name="Silliman N."/>
            <person name="Szabo S."/>
            <person name="Buckhaults P."/>
            <person name="Farrell C."/>
            <person name="Meeh P."/>
            <person name="Markowitz S.D."/>
            <person name="Willis J."/>
            <person name="Dawson D."/>
            <person name="Willson J.K.V."/>
            <person name="Gazdar A.F."/>
            <person name="Hartigan J."/>
            <person name="Wu L."/>
            <person name="Liu C."/>
            <person name="Parmigiani G."/>
            <person name="Park B.H."/>
            <person name="Bachman K.E."/>
            <person name="Papadopoulos N."/>
            <person name="Vogelstein B."/>
            <person name="Kinzler K.W."/>
            <person name="Velculescu V.E."/>
        </authorList>
    </citation>
    <scope>VARIANT [LARGE SCALE ANALYSIS] ILE-441</scope>
</reference>
<organism>
    <name type="scientific">Homo sapiens</name>
    <name type="common">Human</name>
    <dbReference type="NCBI Taxonomy" id="9606"/>
    <lineage>
        <taxon>Eukaryota</taxon>
        <taxon>Metazoa</taxon>
        <taxon>Chordata</taxon>
        <taxon>Craniata</taxon>
        <taxon>Vertebrata</taxon>
        <taxon>Euteleostomi</taxon>
        <taxon>Mammalia</taxon>
        <taxon>Eutheria</taxon>
        <taxon>Euarchontoglires</taxon>
        <taxon>Primates</taxon>
        <taxon>Haplorrhini</taxon>
        <taxon>Catarrhini</taxon>
        <taxon>Hominidae</taxon>
        <taxon>Homo</taxon>
    </lineage>
</organism>
<gene>
    <name type="primary">MCRS1</name>
    <name type="synonym">INO80Q</name>
    <name type="synonym">MSP58</name>
</gene>
<name>MCRS1_HUMAN</name>